<reference key="1">
    <citation type="journal article" date="2006" name="Nature">
        <title>The DNA sequence, annotation and analysis of human chromosome 3.</title>
        <authorList>
            <person name="Muzny D.M."/>
            <person name="Scherer S.E."/>
            <person name="Kaul R."/>
            <person name="Wang J."/>
            <person name="Yu J."/>
            <person name="Sudbrak R."/>
            <person name="Buhay C.J."/>
            <person name="Chen R."/>
            <person name="Cree A."/>
            <person name="Ding Y."/>
            <person name="Dugan-Rocha S."/>
            <person name="Gill R."/>
            <person name="Gunaratne P."/>
            <person name="Harris R.A."/>
            <person name="Hawes A.C."/>
            <person name="Hernandez J."/>
            <person name="Hodgson A.V."/>
            <person name="Hume J."/>
            <person name="Jackson A."/>
            <person name="Khan Z.M."/>
            <person name="Kovar-Smith C."/>
            <person name="Lewis L.R."/>
            <person name="Lozado R.J."/>
            <person name="Metzker M.L."/>
            <person name="Milosavljevic A."/>
            <person name="Miner G.R."/>
            <person name="Morgan M.B."/>
            <person name="Nazareth L.V."/>
            <person name="Scott G."/>
            <person name="Sodergren E."/>
            <person name="Song X.-Z."/>
            <person name="Steffen D."/>
            <person name="Wei S."/>
            <person name="Wheeler D.A."/>
            <person name="Wright M.W."/>
            <person name="Worley K.C."/>
            <person name="Yuan Y."/>
            <person name="Zhang Z."/>
            <person name="Adams C.Q."/>
            <person name="Ansari-Lari M.A."/>
            <person name="Ayele M."/>
            <person name="Brown M.J."/>
            <person name="Chen G."/>
            <person name="Chen Z."/>
            <person name="Clendenning J."/>
            <person name="Clerc-Blankenburg K.P."/>
            <person name="Chen R."/>
            <person name="Chen Z."/>
            <person name="Davis C."/>
            <person name="Delgado O."/>
            <person name="Dinh H.H."/>
            <person name="Dong W."/>
            <person name="Draper H."/>
            <person name="Ernst S."/>
            <person name="Fu G."/>
            <person name="Gonzalez-Garay M.L."/>
            <person name="Garcia D.K."/>
            <person name="Gillett W."/>
            <person name="Gu J."/>
            <person name="Hao B."/>
            <person name="Haugen E."/>
            <person name="Havlak P."/>
            <person name="He X."/>
            <person name="Hennig S."/>
            <person name="Hu S."/>
            <person name="Huang W."/>
            <person name="Jackson L.R."/>
            <person name="Jacob L.S."/>
            <person name="Kelly S.H."/>
            <person name="Kube M."/>
            <person name="Levy R."/>
            <person name="Li Z."/>
            <person name="Liu B."/>
            <person name="Liu J."/>
            <person name="Liu W."/>
            <person name="Lu J."/>
            <person name="Maheshwari M."/>
            <person name="Nguyen B.-V."/>
            <person name="Okwuonu G.O."/>
            <person name="Palmeiri A."/>
            <person name="Pasternak S."/>
            <person name="Perez L.M."/>
            <person name="Phelps K.A."/>
            <person name="Plopper F.J."/>
            <person name="Qiang B."/>
            <person name="Raymond C."/>
            <person name="Rodriguez R."/>
            <person name="Saenphimmachak C."/>
            <person name="Santibanez J."/>
            <person name="Shen H."/>
            <person name="Shen Y."/>
            <person name="Subramanian S."/>
            <person name="Tabor P.E."/>
            <person name="Verduzco D."/>
            <person name="Waldron L."/>
            <person name="Wang J."/>
            <person name="Wang J."/>
            <person name="Wang Q."/>
            <person name="Williams G.A."/>
            <person name="Wong G.K.-S."/>
            <person name="Yao Z."/>
            <person name="Zhang J."/>
            <person name="Zhang X."/>
            <person name="Zhao G."/>
            <person name="Zhou J."/>
            <person name="Zhou Y."/>
            <person name="Nelson D."/>
            <person name="Lehrach H."/>
            <person name="Reinhardt R."/>
            <person name="Naylor S.L."/>
            <person name="Yang H."/>
            <person name="Olson M."/>
            <person name="Weinstock G."/>
            <person name="Gibbs R.A."/>
        </authorList>
    </citation>
    <scope>NUCLEOTIDE SEQUENCE [LARGE SCALE GENOMIC DNA]</scope>
</reference>
<reference key="2">
    <citation type="journal article" date="2004" name="Nat. Genet.">
        <title>Complete sequencing and characterization of 21,243 full-length human cDNAs.</title>
        <authorList>
            <person name="Ota T."/>
            <person name="Suzuki Y."/>
            <person name="Nishikawa T."/>
            <person name="Otsuki T."/>
            <person name="Sugiyama T."/>
            <person name="Irie R."/>
            <person name="Wakamatsu A."/>
            <person name="Hayashi K."/>
            <person name="Sato H."/>
            <person name="Nagai K."/>
            <person name="Kimura K."/>
            <person name="Makita H."/>
            <person name="Sekine M."/>
            <person name="Obayashi M."/>
            <person name="Nishi T."/>
            <person name="Shibahara T."/>
            <person name="Tanaka T."/>
            <person name="Ishii S."/>
            <person name="Yamamoto J."/>
            <person name="Saito K."/>
            <person name="Kawai Y."/>
            <person name="Isono Y."/>
            <person name="Nakamura Y."/>
            <person name="Nagahari K."/>
            <person name="Murakami K."/>
            <person name="Yasuda T."/>
            <person name="Iwayanagi T."/>
            <person name="Wagatsuma M."/>
            <person name="Shiratori A."/>
            <person name="Sudo H."/>
            <person name="Hosoiri T."/>
            <person name="Kaku Y."/>
            <person name="Kodaira H."/>
            <person name="Kondo H."/>
            <person name="Sugawara M."/>
            <person name="Takahashi M."/>
            <person name="Kanda K."/>
            <person name="Yokoi T."/>
            <person name="Furuya T."/>
            <person name="Kikkawa E."/>
            <person name="Omura Y."/>
            <person name="Abe K."/>
            <person name="Kamihara K."/>
            <person name="Katsuta N."/>
            <person name="Sato K."/>
            <person name="Tanikawa M."/>
            <person name="Yamazaki M."/>
            <person name="Ninomiya K."/>
            <person name="Ishibashi T."/>
            <person name="Yamashita H."/>
            <person name="Murakawa K."/>
            <person name="Fujimori K."/>
            <person name="Tanai H."/>
            <person name="Kimata M."/>
            <person name="Watanabe M."/>
            <person name="Hiraoka S."/>
            <person name="Chiba Y."/>
            <person name="Ishida S."/>
            <person name="Ono Y."/>
            <person name="Takiguchi S."/>
            <person name="Watanabe S."/>
            <person name="Yosida M."/>
            <person name="Hotuta T."/>
            <person name="Kusano J."/>
            <person name="Kanehori K."/>
            <person name="Takahashi-Fujii A."/>
            <person name="Hara H."/>
            <person name="Tanase T.-O."/>
            <person name="Nomura Y."/>
            <person name="Togiya S."/>
            <person name="Komai F."/>
            <person name="Hara R."/>
            <person name="Takeuchi K."/>
            <person name="Arita M."/>
            <person name="Imose N."/>
            <person name="Musashino K."/>
            <person name="Yuuki H."/>
            <person name="Oshima A."/>
            <person name="Sasaki N."/>
            <person name="Aotsuka S."/>
            <person name="Yoshikawa Y."/>
            <person name="Matsunawa H."/>
            <person name="Ichihara T."/>
            <person name="Shiohata N."/>
            <person name="Sano S."/>
            <person name="Moriya S."/>
            <person name="Momiyama H."/>
            <person name="Satoh N."/>
            <person name="Takami S."/>
            <person name="Terashima Y."/>
            <person name="Suzuki O."/>
            <person name="Nakagawa S."/>
            <person name="Senoh A."/>
            <person name="Mizoguchi H."/>
            <person name="Goto Y."/>
            <person name="Shimizu F."/>
            <person name="Wakebe H."/>
            <person name="Hishigaki H."/>
            <person name="Watanabe T."/>
            <person name="Sugiyama A."/>
            <person name="Takemoto M."/>
            <person name="Kawakami B."/>
            <person name="Yamazaki M."/>
            <person name="Watanabe K."/>
            <person name="Kumagai A."/>
            <person name="Itakura S."/>
            <person name="Fukuzumi Y."/>
            <person name="Fujimori Y."/>
            <person name="Komiyama M."/>
            <person name="Tashiro H."/>
            <person name="Tanigami A."/>
            <person name="Fujiwara T."/>
            <person name="Ono T."/>
            <person name="Yamada K."/>
            <person name="Fujii Y."/>
            <person name="Ozaki K."/>
            <person name="Hirao M."/>
            <person name="Ohmori Y."/>
            <person name="Kawabata A."/>
            <person name="Hikiji T."/>
            <person name="Kobatake N."/>
            <person name="Inagaki H."/>
            <person name="Ikema Y."/>
            <person name="Okamoto S."/>
            <person name="Okitani R."/>
            <person name="Kawakami T."/>
            <person name="Noguchi S."/>
            <person name="Itoh T."/>
            <person name="Shigeta K."/>
            <person name="Senba T."/>
            <person name="Matsumura K."/>
            <person name="Nakajima Y."/>
            <person name="Mizuno T."/>
            <person name="Morinaga M."/>
            <person name="Sasaki M."/>
            <person name="Togashi T."/>
            <person name="Oyama M."/>
            <person name="Hata H."/>
            <person name="Watanabe M."/>
            <person name="Komatsu T."/>
            <person name="Mizushima-Sugano J."/>
            <person name="Satoh T."/>
            <person name="Shirai Y."/>
            <person name="Takahashi Y."/>
            <person name="Nakagawa K."/>
            <person name="Okumura K."/>
            <person name="Nagase T."/>
            <person name="Nomura N."/>
            <person name="Kikuchi H."/>
            <person name="Masuho Y."/>
            <person name="Yamashita R."/>
            <person name="Nakai K."/>
            <person name="Yada T."/>
            <person name="Nakamura Y."/>
            <person name="Ohara O."/>
            <person name="Isogai T."/>
            <person name="Sugano S."/>
        </authorList>
    </citation>
    <scope>NUCLEOTIDE SEQUENCE [LARGE SCALE MRNA] OF 1-1390</scope>
    <source>
        <tissue>Brain</tissue>
        <tissue>Cerebellum</tissue>
    </source>
</reference>
<reference key="3">
    <citation type="journal article" date="2007" name="BMC Genomics">
        <title>The full-ORF clone resource of the German cDNA consortium.</title>
        <authorList>
            <person name="Bechtel S."/>
            <person name="Rosenfelder H."/>
            <person name="Duda A."/>
            <person name="Schmidt C.P."/>
            <person name="Ernst U."/>
            <person name="Wellenreuther R."/>
            <person name="Mehrle A."/>
            <person name="Schuster C."/>
            <person name="Bahr A."/>
            <person name="Bloecker H."/>
            <person name="Heubner D."/>
            <person name="Hoerlein A."/>
            <person name="Michel G."/>
            <person name="Wedler H."/>
            <person name="Koehrer K."/>
            <person name="Ottenwaelder B."/>
            <person name="Poustka A."/>
            <person name="Wiemann S."/>
            <person name="Schupp I."/>
        </authorList>
    </citation>
    <scope>NUCLEOTIDE SEQUENCE [LARGE SCALE MRNA] OF 284-2564 (ISOFORM 3)</scope>
    <scope>NUCLEOTIDE SEQUENCE [LARGE SCALE MRNA] OF 927-1482 (ISOFORMS 1/2/3)</scope>
    <scope>NUCLEOTIDE SEQUENCE [LARGE SCALE MRNA] OF 2228-2564 (ISOFORM 1)</scope>
    <source>
        <tissue>Adipose tissue</tissue>
    </source>
</reference>
<reference key="4">
    <citation type="journal article" date="2001" name="Mol. Cell. Neurosci.">
        <title>Identification of the full-length huntingtin-interacting protein p231HBP/HYPB as a DNA-binding factor.</title>
        <authorList>
            <person name="Rega S."/>
            <person name="Stiewe T."/>
            <person name="Chang D.-I."/>
            <person name="Pollmeier B."/>
            <person name="Esche H."/>
            <person name="Bardenheuer W."/>
            <person name="Marquitan G."/>
            <person name="Puetzer B.M."/>
        </authorList>
    </citation>
    <scope>NUCLEOTIDE SEQUENCE [MRNA] OF 368-2564 (ISOFORM 1)</scope>
    <scope>FUNCTION (MICROBIAL INFECTION)</scope>
    <scope>DNA-BINDING</scope>
    <scope>TISSUE SPECIFICITY</scope>
    <scope>INTERACTION WITH HTT</scope>
</reference>
<reference key="5">
    <citation type="journal article" date="2004" name="Genome Res.">
        <title>The status, quality, and expansion of the NIH full-length cDNA project: the Mammalian Gene Collection (MGC).</title>
        <authorList>
            <consortium name="The MGC Project Team"/>
        </authorList>
    </citation>
    <scope>NUCLEOTIDE SEQUENCE [LARGE SCALE MRNA] OF 388-2564 (ISOFORM 1)</scope>
    <scope>VARIANT LEU-1962</scope>
    <source>
        <tissue>Cerebellum</tissue>
        <tissue>Duodenum</tissue>
        <tissue>Testis</tissue>
    </source>
</reference>
<reference key="6">
    <citation type="journal article" date="2005" name="J. Biol. Chem.">
        <title>Identification and characterization of a novel human histone H3 lysine 36 specific methyltransferase.</title>
        <authorList>
            <person name="Sun X.-J."/>
            <person name="Wei J."/>
            <person name="Wu X.-Y."/>
            <person name="Hu M."/>
            <person name="Wang L."/>
            <person name="Wang H.-H."/>
            <person name="Zhang Q.-H."/>
            <person name="Chen S.-J."/>
            <person name="Huang Q.-H."/>
            <person name="Chen Z."/>
        </authorList>
    </citation>
    <scope>NUCLEOTIDE SEQUENCE [MRNA] OF 481-2564 (ISOFORM 1)</scope>
    <scope>FUNCTION</scope>
    <scope>AUTOMETHYLATION</scope>
    <scope>MUTAGENESIS OF ARG-1625</scope>
    <scope>INTERACTION WITH POLR2A</scope>
</reference>
<reference key="7">
    <citation type="submission" date="2004-03" db="EMBL/GenBank/DDBJ databases">
        <title>Identification of a human histone H3-K36-specific methyltransferase that is orthologous to Saccharomyces cerevisiae SET2 protein.</title>
        <authorList>
            <person name="Sun X.J."/>
            <person name="Wei J."/>
            <person name="Wu X.Y."/>
            <person name="Hu M."/>
            <person name="Wang H.H."/>
            <person name="Zhang Q.H."/>
            <person name="Huang Q.H."/>
            <person name="Chen Z."/>
        </authorList>
    </citation>
    <scope>NUCLEOTIDE SEQUENCE [MRNA] OF 481-2564 (ISOFORM 2)</scope>
</reference>
<reference key="8">
    <citation type="journal article" date="2000" name="DNA Res.">
        <title>Prediction of the coding sequences of unidentified human genes. XIX. The complete sequences of 100 new cDNA clones from brain which code for large proteins in vitro.</title>
        <authorList>
            <person name="Nagase T."/>
            <person name="Kikuno R."/>
            <person name="Hattori A."/>
            <person name="Kondo Y."/>
            <person name="Okumura K."/>
            <person name="Ohara O."/>
        </authorList>
    </citation>
    <scope>NUCLEOTIDE SEQUENCE [LARGE SCALE MRNA] OF 650-2564 (ISOFORM 1)</scope>
    <scope>VARIANT LEU-1962</scope>
    <source>
        <tissue>Brain</tissue>
    </source>
</reference>
<reference key="9">
    <citation type="journal article" date="2002" name="DNA Res.">
        <title>Construction of expression-ready cDNA clones for KIAA genes: manual curation of 330 KIAA cDNA clones.</title>
        <authorList>
            <person name="Nakajima D."/>
            <person name="Okazaki N."/>
            <person name="Yamakawa H."/>
            <person name="Kikuno R."/>
            <person name="Ohara O."/>
            <person name="Nagase T."/>
        </authorList>
    </citation>
    <scope>SEQUENCE REVISION</scope>
</reference>
<reference key="10">
    <citation type="journal article" date="2000" name="Genome Res.">
        <title>Cloning and functional analysis of cDNAs with open reading frames for 300 previously undefined genes expressed in CD34+ hematopoietic stem/progenitor cells.</title>
        <authorList>
            <person name="Zhang Q.-H."/>
            <person name="Ye M."/>
            <person name="Wu X.-Y."/>
            <person name="Ren S.-X."/>
            <person name="Zhao M."/>
            <person name="Zhao C.-J."/>
            <person name="Fu G."/>
            <person name="Shen Y."/>
            <person name="Fan H.-Y."/>
            <person name="Lu G."/>
            <person name="Zhong M."/>
            <person name="Xu X.-R."/>
            <person name="Han Z.-G."/>
            <person name="Zhang J.-W."/>
            <person name="Tao J."/>
            <person name="Huang Q.-H."/>
            <person name="Zhou J."/>
            <person name="Hu G.-X."/>
            <person name="Gu J."/>
            <person name="Chen S.-J."/>
            <person name="Chen Z."/>
        </authorList>
    </citation>
    <scope>NUCLEOTIDE SEQUENCE [LARGE SCALE MRNA] OF 1402-2069</scope>
    <source>
        <tissue>Umbilical cord blood</tissue>
    </source>
</reference>
<reference key="11">
    <citation type="journal article" date="1998" name="Hum. Mol. Genet.">
        <title>Huntingtin interacts with a family of WW domain proteins.</title>
        <authorList>
            <person name="Faber P.W."/>
            <person name="Barnes G.T."/>
            <person name="Srinidhi J."/>
            <person name="Chen J."/>
            <person name="Gusella J.F."/>
            <person name="MacDonald M.E."/>
        </authorList>
    </citation>
    <scope>NUCLEOTIDE SEQUENCE [MRNA] OF 2378-2564</scope>
    <scope>INTERACTION WITH HTT</scope>
    <source>
        <tissue>Frontal cortex</tissue>
    </source>
</reference>
<reference key="12">
    <citation type="journal article" date="2000" name="Hum. Mol. Genet.">
        <title>Huntingtin's WW domain partners in Huntington's disease post-mortem brain fulfill genetic criteria for direct involvement in Huntington's disease pathogenesis.</title>
        <authorList>
            <person name="Passani L.A."/>
            <person name="Bedford M.T."/>
            <person name="Faber P.W."/>
            <person name="McGinnis K.M."/>
            <person name="Sharp A.H."/>
            <person name="Gusella J.F."/>
            <person name="Vonsattel J.-P."/>
            <person name="MacDonald M.E."/>
        </authorList>
    </citation>
    <scope>INTERACTION WITH HTT</scope>
</reference>
<reference key="13">
    <citation type="journal article" date="2006" name="Cell">
        <title>Global, in vivo, and site-specific phosphorylation dynamics in signaling networks.</title>
        <authorList>
            <person name="Olsen J.V."/>
            <person name="Blagoev B."/>
            <person name="Gnad F."/>
            <person name="Macek B."/>
            <person name="Kumar C."/>
            <person name="Mortensen P."/>
            <person name="Mann M."/>
        </authorList>
    </citation>
    <scope>IDENTIFICATION BY MASS SPECTROMETRY [LARGE SCALE ANALYSIS]</scope>
    <source>
        <tissue>Cervix carcinoma</tissue>
    </source>
</reference>
<reference key="14">
    <citation type="journal article" date="2008" name="Cell. Signal.">
        <title>Histone methyltransferase protein SETD2 interacts with p53 and selectively regulates its downstream genes.</title>
        <authorList>
            <person name="Xie P."/>
            <person name="Tian C."/>
            <person name="An L."/>
            <person name="Nie J."/>
            <person name="Lu K."/>
            <person name="Xing G."/>
            <person name="Zhang L."/>
            <person name="He F."/>
        </authorList>
    </citation>
    <scope>INTERACTION WITH TP53</scope>
</reference>
<reference key="15">
    <citation type="journal article" date="2008" name="Genes Dev.">
        <title>The Iws1:Spt6:CTD complex controls cotranscriptional mRNA biosynthesis and HYPB/Setd2-mediated histone H3K36 methylation.</title>
        <authorList>
            <person name="Yoh S.M."/>
            <person name="Lucas J.S."/>
            <person name="Jones K.A."/>
        </authorList>
    </citation>
    <scope>FUNCTION</scope>
    <scope>INTERACTION WITH IWS1</scope>
</reference>
<reference key="16">
    <citation type="journal article" date="2008" name="J. Proteome Res.">
        <title>Combining protein-based IMAC, peptide-based IMAC, and MudPIT for efficient phosphoproteomic analysis.</title>
        <authorList>
            <person name="Cantin G.T."/>
            <person name="Yi W."/>
            <person name="Lu B."/>
            <person name="Park S.K."/>
            <person name="Xu T."/>
            <person name="Lee J.-D."/>
            <person name="Yates J.R. III"/>
        </authorList>
    </citation>
    <scope>PHOSPHORYLATION [LARGE SCALE ANALYSIS] AT SER-1228</scope>
    <scope>IDENTIFICATION BY MASS SPECTROMETRY [LARGE SCALE ANALYSIS]</scope>
    <source>
        <tissue>Cervix carcinoma</tissue>
    </source>
</reference>
<reference key="17">
    <citation type="journal article" date="2008" name="Proc. Natl. Acad. Sci. U.S.A.">
        <title>A quantitative atlas of mitotic phosphorylation.</title>
        <authorList>
            <person name="Dephoure N."/>
            <person name="Zhou C."/>
            <person name="Villen J."/>
            <person name="Beausoleil S.A."/>
            <person name="Bakalarski C.E."/>
            <person name="Elledge S.J."/>
            <person name="Gygi S.P."/>
        </authorList>
    </citation>
    <scope>PHOSPHORYLATION [LARGE SCALE ANALYSIS] AT SER-321; SER-323; SER-624; SER-754; SER-1228; THR-1872; SER-2080 AND SER-2082</scope>
    <scope>IDENTIFICATION BY MASS SPECTROMETRY [LARGE SCALE ANALYSIS]</scope>
    <source>
        <tissue>Cervix carcinoma</tissue>
    </source>
</reference>
<reference key="18">
    <citation type="journal article" date="2009" name="Anal. Chem.">
        <title>Lys-N and trypsin cover complementary parts of the phosphoproteome in a refined SCX-based approach.</title>
        <authorList>
            <person name="Gauci S."/>
            <person name="Helbig A.O."/>
            <person name="Slijper M."/>
            <person name="Krijgsveld J."/>
            <person name="Heck A.J."/>
            <person name="Mohammed S."/>
        </authorList>
    </citation>
    <scope>IDENTIFICATION BY MASS SPECTROMETRY [LARGE SCALE ANALYSIS]</scope>
</reference>
<reference key="19">
    <citation type="journal article" date="2009" name="J. Biol. Chem.">
        <title>Heterogeneous nuclear ribonucleoprotein L is a subunit of human KMT3a/Set2 complex required for H3 Lys-36 trimethylation activity in vivo.</title>
        <authorList>
            <person name="Yuan W."/>
            <person name="Xie J."/>
            <person name="Long C."/>
            <person name="Erdjument-Bromage H."/>
            <person name="Ding X."/>
            <person name="Zheng Y."/>
            <person name="Tempst P."/>
            <person name="Chen S."/>
            <person name="Zhu B."/>
            <person name="Reinberg D."/>
        </authorList>
    </citation>
    <scope>FUNCTION</scope>
    <scope>CATALYTIC ACTIVITY</scope>
    <scope>INTERACTION WITH HNRNPL</scope>
</reference>
<reference key="20">
    <citation type="journal article" date="2009" name="Sci. Signal.">
        <title>Quantitative phosphoproteomic analysis of T cell receptor signaling reveals system-wide modulation of protein-protein interactions.</title>
        <authorList>
            <person name="Mayya V."/>
            <person name="Lundgren D.H."/>
            <person name="Hwang S.-I."/>
            <person name="Rezaul K."/>
            <person name="Wu L."/>
            <person name="Eng J.K."/>
            <person name="Rodionov V."/>
            <person name="Han D.K."/>
        </authorList>
    </citation>
    <scope>PHOSPHORYLATION [LARGE SCALE ANALYSIS] AT SER-131; SER-321; SER-323; SER-708; SER-744 AND SER-754</scope>
    <scope>IDENTIFICATION BY MASS SPECTROMETRY [LARGE SCALE ANALYSIS]</scope>
    <source>
        <tissue>Leukemic T-cell</tissue>
    </source>
</reference>
<reference key="21">
    <citation type="journal article" date="2010" name="Nature">
        <title>Systematic sequencing of renal carcinoma reveals inactivation of histone modifying genes.</title>
        <authorList>
            <person name="Dalgliesh G.L."/>
            <person name="Furge K."/>
            <person name="Greenman C."/>
            <person name="Chen L."/>
            <person name="Bignell G."/>
            <person name="Butler A."/>
            <person name="Davies H."/>
            <person name="Edkins S."/>
            <person name="Hardy C."/>
            <person name="Latimer C."/>
            <person name="Teague J."/>
            <person name="Andrews J."/>
            <person name="Barthorpe S."/>
            <person name="Beare D."/>
            <person name="Buck G."/>
            <person name="Campbell P.J."/>
            <person name="Forbes S."/>
            <person name="Jia M."/>
            <person name="Jones D."/>
            <person name="Knott H."/>
            <person name="Kok C.Y."/>
            <person name="Lau K.W."/>
            <person name="Leroy C."/>
            <person name="Lin M.L."/>
            <person name="McBride D.J."/>
            <person name="Maddison M."/>
            <person name="Maguire S."/>
            <person name="McLay K."/>
            <person name="Menzies A."/>
            <person name="Mironenko T."/>
            <person name="Mulderrig L."/>
            <person name="Mudie L."/>
            <person name="O'Meara S."/>
            <person name="Pleasance E."/>
            <person name="Rajasingham A."/>
            <person name="Shepherd R."/>
            <person name="Smith R."/>
            <person name="Stebbings L."/>
            <person name="Stephens P."/>
            <person name="Tang G."/>
            <person name="Tarpey P.S."/>
            <person name="Turrell K."/>
            <person name="Dykema K.J."/>
            <person name="Khoo S.K."/>
            <person name="Petillo D."/>
            <person name="Wondergem B."/>
            <person name="Anema J."/>
            <person name="Kahnoski R.J."/>
            <person name="Teh B.T."/>
            <person name="Stratton M.R."/>
            <person name="Futreal P.A."/>
        </authorList>
    </citation>
    <scope>INVOLVEMENT IN RCC</scope>
</reference>
<reference key="22">
    <citation type="journal article" date="2010" name="Sci. Signal.">
        <title>Quantitative phosphoproteomics reveals widespread full phosphorylation site occupancy during mitosis.</title>
        <authorList>
            <person name="Olsen J.V."/>
            <person name="Vermeulen M."/>
            <person name="Santamaria A."/>
            <person name="Kumar C."/>
            <person name="Miller M.L."/>
            <person name="Jensen L.J."/>
            <person name="Gnad F."/>
            <person name="Cox J."/>
            <person name="Jensen T.S."/>
            <person name="Nigg E.A."/>
            <person name="Brunak S."/>
            <person name="Mann M."/>
        </authorList>
    </citation>
    <scope>PHOSPHORYLATION [LARGE SCALE ANALYSIS] AT SER-321; SER-323; SER-624 AND THR-1872</scope>
    <scope>IDENTIFICATION BY MASS SPECTROMETRY [LARGE SCALE ANALYSIS]</scope>
    <source>
        <tissue>Cervix carcinoma</tissue>
    </source>
</reference>
<reference key="23">
    <citation type="journal article" date="2011" name="Nat. Struct. Mol. Biol.">
        <title>Splicing enhances recruitment of methyltransferase HYPB/Setd2 and methylation of histone H3 Lys36.</title>
        <authorList>
            <person name="de Almeida S.F."/>
            <person name="Grosso A.R."/>
            <person name="Koch F."/>
            <person name="Fenouil R."/>
            <person name="Carvalho S."/>
            <person name="Andrade J."/>
            <person name="Levezinho H."/>
            <person name="Gut M."/>
            <person name="Eick D."/>
            <person name="Gut I."/>
            <person name="Andrau J.C."/>
            <person name="Ferrier P."/>
            <person name="Carmo-Fonseca M."/>
        </authorList>
    </citation>
    <scope>FUNCTION</scope>
</reference>
<reference key="24">
    <citation type="journal article" date="2011" name="PLoS ONE">
        <title>Relationship between gene body DNA methylation and intragenic H3K9me3 and H3K36me3 chromatin marks.</title>
        <authorList>
            <person name="Hahn M.A."/>
            <person name="Wu X."/>
            <person name="Li A.X."/>
            <person name="Hahn T."/>
            <person name="Pfeifer G.P."/>
        </authorList>
    </citation>
    <scope>FUNCTION</scope>
</reference>
<reference key="25">
    <citation type="journal article" date="2011" name="Sci. Signal.">
        <title>System-wide temporal characterization of the proteome and phosphoproteome of human embryonic stem cell differentiation.</title>
        <authorList>
            <person name="Rigbolt K.T."/>
            <person name="Prokhorova T.A."/>
            <person name="Akimov V."/>
            <person name="Henningsen J."/>
            <person name="Johansen P.T."/>
            <person name="Kratchmarova I."/>
            <person name="Kassem M."/>
            <person name="Mann M."/>
            <person name="Olsen J.V."/>
            <person name="Blagoev B."/>
        </authorList>
    </citation>
    <scope>PHOSPHORYLATION [LARGE SCALE ANALYSIS] AT SER-321; SER-323; SER-624; SER-754 AND SER-2082</scope>
    <scope>IDENTIFICATION BY MASS SPECTROMETRY [LARGE SCALE ANALYSIS]</scope>
</reference>
<reference key="26">
    <citation type="journal article" date="2012" name="Science">
        <title>Multiplex targeted sequencing identifies recurrently mutated genes in autism spectrum disorders.</title>
        <authorList>
            <person name="O'Roak B.J."/>
            <person name="Vives L."/>
            <person name="Fu W."/>
            <person name="Egertson J.D."/>
            <person name="Stanaway I.B."/>
            <person name="Phelps I.G."/>
            <person name="Carvill G."/>
            <person name="Kumar A."/>
            <person name="Lee C."/>
            <person name="Ankenman K."/>
            <person name="Munson J."/>
            <person name="Hiatt J.B."/>
            <person name="Turner E.H."/>
            <person name="Levy R."/>
            <person name="O'Day D.R."/>
            <person name="Krumm N."/>
            <person name="Coe B.P."/>
            <person name="Martin B.K."/>
            <person name="Borenstein E."/>
            <person name="Nickerson D.A."/>
            <person name="Mefford H.C."/>
            <person name="Doherty D."/>
            <person name="Akey J.M."/>
            <person name="Bernier R."/>
            <person name="Eichler E.E."/>
            <person name="Shendure J."/>
        </authorList>
    </citation>
    <scope>INVOLVEMENT IN LLS</scope>
</reference>
<reference key="27">
    <citation type="journal article" date="2013" name="Cell">
        <title>The histone mark H3K36me3 regulates human DNA mismatch repair through its interaction with MutSalpha.</title>
        <authorList>
            <person name="Li F."/>
            <person name="Mao G."/>
            <person name="Tong D."/>
            <person name="Huang J."/>
            <person name="Gu L."/>
            <person name="Yang W."/>
            <person name="Li G.M."/>
        </authorList>
    </citation>
    <scope>FUNCTION</scope>
    <scope>INVOLVEMENT IN RCC</scope>
    <scope>VARIANTS RCC ASP-1733 AND PRO-1769</scope>
    <scope>CHARACTERIZATION OF VARIANTS RCC ASP-1733 AND PRO-1769</scope>
</reference>
<reference key="28">
    <citation type="journal article" date="2013" name="J. Proteome Res.">
        <title>Toward a comprehensive characterization of a human cancer cell phosphoproteome.</title>
        <authorList>
            <person name="Zhou H."/>
            <person name="Di Palma S."/>
            <person name="Preisinger C."/>
            <person name="Peng M."/>
            <person name="Polat A.N."/>
            <person name="Heck A.J."/>
            <person name="Mohammed S."/>
        </authorList>
    </citation>
    <scope>PHOSPHORYLATION [LARGE SCALE ANALYSIS] AT SER-131; SER-344; SER-422; SER-532; SER-614; SER-624; THR-626; SER-744; SER-754; SER-1098; SER-1228; SER-1696; THR-1853; THR-1872; SER-1888; SER-1952; SER-2080 AND SER-2082</scope>
    <scope>IDENTIFICATION BY MASS SPECTROMETRY [LARGE SCALE ANALYSIS]</scope>
    <source>
        <tissue>Cervix carcinoma</tissue>
        <tissue>Erythroleukemia</tissue>
    </source>
</reference>
<reference key="29">
    <citation type="journal article" date="2013" name="Nature">
        <title>Comprehensive molecular characterization of clear cell renal cell carcinoma.</title>
        <authorList>
            <person name="Creighton C.J."/>
            <person name="Morgan M."/>
            <person name="Gunaratne P.H."/>
            <person name="Wheeler D.A."/>
            <person name="Gibbs R.A."/>
            <person name="Gordon Robertson A."/>
            <person name="Chu A."/>
            <person name="Beroukhim R."/>
            <person name="Cibulskis K."/>
            <person name="Signoretti S."/>
            <person name="Vandin Hsin-Ta Wu F."/>
            <person name="Raphael B.J."/>
            <person name="Verhaak R.G."/>
            <person name="Tamboli P."/>
            <person name="Torres-Garcia W."/>
            <person name="Akbani R."/>
            <person name="Weinstein J.N."/>
            <person name="Reuter V."/>
            <person name="Hsieh J.J."/>
            <person name="Rose Brannon A."/>
            <person name="Ari Hakimi A."/>
            <person name="Jacobsen A."/>
            <person name="Ciriello G."/>
            <person name="Reva B."/>
            <person name="Ricketts C.J."/>
            <person name="Marston Linehan W."/>
            <person name="Stuart J.M."/>
            <person name="Kimryn Rathmell W."/>
            <person name="Shen H."/>
            <person name="Laird P.W."/>
            <person name="Muzny D."/>
            <person name="Davis C."/>
            <person name="Morgan M."/>
            <person name="Xi L."/>
            <person name="Chang K."/>
            <person name="Kakkar N."/>
            <person name="Trevino L.R."/>
            <person name="Benton S."/>
            <person name="Reid J.G."/>
            <person name="Morton D."/>
            <person name="Doddapaneni H."/>
            <person name="Han Y."/>
            <person name="Lewis L."/>
            <person name="Dinh H."/>
            <person name="Kovar C."/>
            <person name="Zhu Y."/>
            <person name="Santibanez J."/>
            <person name="Wang M."/>
            <person name="Hale W."/>
            <person name="Kalra D."/>
            <person name="Creighton C.J."/>
            <person name="Wheeler D.A."/>
            <person name="Gibbs R.A."/>
            <person name="Getz G."/>
            <person name="Cibulskis K."/>
            <person name="Lawrence M.S."/>
            <person name="Sougnez C."/>
            <person name="Carter S.L."/>
            <person name="Sivachenko A."/>
            <person name="Lichtenstein L."/>
            <person name="Stewart C."/>
            <person name="Voet D."/>
            <person name="Fisher S."/>
            <person name="Gabriel S.B."/>
            <person name="Lander E."/>
            <person name="Beroukhim R."/>
            <person name="Schumacher S.E."/>
            <person name="Tabak B."/>
            <person name="Saksena G."/>
            <person name="Onofrio R.C."/>
            <person name="Carter S.L."/>
            <person name="Cherniack A.D."/>
            <person name="Gentry J."/>
            <person name="Ardlie K."/>
            <person name="Sougnez C."/>
            <person name="Getz G."/>
            <person name="Gabriel S.B."/>
            <person name="Meyerson M."/>
            <person name="Gordon Robertson A."/>
            <person name="Chu A."/>
            <person name="Chun H.J."/>
            <person name="Mungall A.J."/>
            <person name="Sipahimalani P."/>
            <person name="Stoll D."/>
            <person name="Ally A."/>
            <person name="Balasundaram M."/>
            <person name="Butterfield Y.S."/>
            <person name="Carlsen R."/>
            <person name="Carter C."/>
            <person name="Chuah E."/>
            <person name="Coope R.J."/>
            <person name="Dhalla N."/>
            <person name="Gorski S."/>
            <person name="Guin R."/>
            <person name="Hirst C."/>
            <person name="Hirst M."/>
            <person name="Holt R.A."/>
            <person name="Lebovitz C."/>
            <person name="Lee D."/>
            <person name="Li H.I."/>
            <person name="Mayo M."/>
            <person name="Moore R.A."/>
            <person name="Pleasance E."/>
            <person name="Plettner P."/>
            <person name="Schein J.E."/>
            <person name="Shafiei A."/>
            <person name="Slobodan J.R."/>
            <person name="Tam A."/>
            <person name="Thiessen N."/>
            <person name="Varhol R.J."/>
            <person name="Wye N."/>
            <person name="Zhao Y."/>
            <person name="Birol I."/>
            <person name="Jones S.J."/>
            <person name="Marra M.A."/>
            <person name="Auman J.T."/>
            <person name="Tan D."/>
            <person name="Jones C.D."/>
            <person name="Hoadley K.A."/>
            <person name="Mieczkowski P.A."/>
            <person name="Mose L.E."/>
            <person name="Jefferys S.R."/>
            <person name="Topal M.D."/>
            <person name="Liquori C."/>
            <person name="Turman Y.J."/>
            <person name="Shi Y."/>
            <person name="Waring S."/>
            <person name="Buda E."/>
            <person name="Walsh J."/>
            <person name="Wu J."/>
            <person name="Bodenheimer T."/>
            <person name="Hoyle A.P."/>
            <person name="Simons J.V."/>
            <person name="Soloway M.G."/>
            <person name="Balu S."/>
            <person name="Parker J.S."/>
            <person name="Neil Hayes D."/>
            <person name="Perou C.M."/>
            <person name="Kucherlapati R."/>
            <person name="Park P."/>
            <person name="Shen H."/>
            <person name="Triche T. Jr."/>
            <person name="Weisenberger D.J."/>
            <person name="Lai P.H."/>
            <person name="Bootwalla M.S."/>
            <person name="Maglinte D.T."/>
            <person name="Mahurkar S."/>
            <person name="Berman B.P."/>
            <person name="Van Den Berg D.J."/>
            <person name="Cope L."/>
            <person name="Baylin S.B."/>
            <person name="Laird P.W."/>
            <person name="Creighton C.J."/>
            <person name="Wheeler D.A."/>
            <person name="Getz G."/>
            <person name="Noble M.S."/>
            <person name="Dicara D."/>
            <person name="Zhang H."/>
            <person name="Cho J."/>
            <person name="Heiman D.I."/>
            <person name="Gehlenborg N."/>
            <person name="Voet D."/>
            <person name="Mallard W."/>
            <person name="Lin P."/>
            <person name="Frazer S."/>
            <person name="Stojanov P."/>
            <person name="Liu Y."/>
            <person name="Zhou L."/>
            <person name="Kim J."/>
            <person name="Lawrence M.S."/>
            <person name="Chin L."/>
            <person name="Vandin F."/>
            <person name="Wu H.T."/>
            <person name="Raphael B.J."/>
            <person name="Benz C."/>
            <person name="Yau C."/>
            <person name="Reynolds S.M."/>
            <person name="Shmulevich I."/>
            <person name="Verhaak R.G."/>
            <person name="Torres-Garcia W."/>
            <person name="Vegesna R."/>
            <person name="Kim H."/>
            <person name="Zhang W."/>
            <person name="Cogdell D."/>
            <person name="Jonasch E."/>
            <person name="Ding Z."/>
            <person name="Lu Y."/>
            <person name="Akbani R."/>
            <person name="Zhang N."/>
            <person name="Unruh A.K."/>
            <person name="Casasent T.D."/>
            <person name="Wakefield C."/>
            <person name="Tsavachidou D."/>
            <person name="Chin L."/>
            <person name="Mills G.B."/>
            <person name="Weinstein J.N."/>
            <person name="Jacobsen A."/>
            <person name="Rose Brannon A."/>
            <person name="Ciriello G."/>
            <person name="Schultz N."/>
            <person name="Ari Hakimi A."/>
            <person name="Reva B."/>
            <person name="Antipin Y."/>
            <person name="Gao J."/>
            <person name="Cerami E."/>
            <person name="Gross B."/>
            <person name="Arman Aksoy B."/>
            <person name="Sinha R."/>
            <person name="Weinhold N."/>
            <person name="Onur Sumer S."/>
            <person name="Taylor B.S."/>
            <person name="Shen R."/>
            <person name="Ostrovnaya I."/>
            <person name="Hsieh J.J."/>
            <person name="Berger M.F."/>
            <person name="Ladanyi M."/>
            <person name="Sander C."/>
            <person name="Fei S.S."/>
            <person name="Stout A."/>
            <person name="Spellman P.T."/>
            <person name="Rubin D.L."/>
            <person name="Liu T.T."/>
            <person name="Stuart J.M."/>
            <person name="Ng S."/>
            <person name="Paull E.O."/>
            <person name="Carlin D."/>
            <person name="Goldstein T."/>
            <person name="Waltman P."/>
            <person name="Ellrott K."/>
            <person name="Zhu J."/>
            <person name="Haussler D."/>
            <person name="Gunaratne P.H."/>
            <person name="Xiao W."/>
            <person name="Shelton C."/>
            <person name="Gardner J."/>
            <person name="Penny R."/>
            <person name="Sherman M."/>
            <person name="Mallery D."/>
            <person name="Morris S."/>
            <person name="Paulauskis J."/>
            <person name="Burnett K."/>
            <person name="Shelton T."/>
            <person name="Signoretti S."/>
            <person name="Kaelin W.G."/>
            <person name="Choueiri T."/>
            <person name="Atkins M.B."/>
            <person name="Penny R."/>
            <person name="Burnett K."/>
            <person name="Mallery D."/>
            <person name="Curley E."/>
            <person name="Tickoo S."/>
            <person name="Reuter V."/>
            <person name="Kimryn Rathmell W."/>
            <person name="Thorne L."/>
            <person name="Boice L."/>
            <person name="Huang M."/>
            <person name="Fisher J.C."/>
            <person name="Marston Linehan W."/>
            <person name="Vocke C.D."/>
            <person name="Peterson J."/>
            <person name="Worrell R."/>
            <person name="Merino M.J."/>
            <person name="Schmidt L.S."/>
            <person name="Tamboli P."/>
            <person name="Czerniak B.A."/>
            <person name="Aldape K.D."/>
            <person name="Wood C.G."/>
            <person name="Boyd J."/>
            <person name="Weaver J."/>
            <person name="Iacocca M.V."/>
            <person name="Petrelli N."/>
            <person name="Witkin G."/>
            <person name="Brown J."/>
            <person name="Czerwinski C."/>
            <person name="Huelsenbeck-Dill L."/>
            <person name="Rabeno B."/>
            <person name="Myers J."/>
            <person name="Morrison C."/>
            <person name="Bergsten J."/>
            <person name="Eckman J."/>
            <person name="Harr J."/>
            <person name="Smith C."/>
            <person name="Tucker K."/>
            <person name="Anne Zach L."/>
            <person name="Bshara W."/>
            <person name="Gaudioso C."/>
            <person name="Morrison C."/>
            <person name="Dhir R."/>
            <person name="Maranchie J."/>
            <person name="Nelson J."/>
            <person name="Parwani A."/>
            <person name="Potapova O."/>
            <person name="Fedosenko K."/>
            <person name="Cheville J.C."/>
            <person name="Houston Thompson R."/>
            <person name="Signoretti S."/>
            <person name="Kaelin W.G."/>
            <person name="Atkins M.B."/>
            <person name="Tickoo S."/>
            <person name="Reuter V."/>
            <person name="Marston Linehan W."/>
            <person name="Vocke C.D."/>
            <person name="Peterson J."/>
            <person name="Merino M.J."/>
            <person name="Schmidt L.S."/>
            <person name="Tamboli P."/>
            <person name="Mosquera J.M."/>
            <person name="Rubin M.A."/>
            <person name="Blute M.L."/>
            <person name="Kimryn Rathmell W."/>
            <person name="Pihl T."/>
            <person name="Jensen M."/>
            <person name="Sfeir R."/>
            <person name="Kahn A."/>
            <person name="Chu A."/>
            <person name="Kothiyal P."/>
            <person name="Snyder E."/>
            <person name="Pontius J."/>
            <person name="Ayala B."/>
            <person name="Backus M."/>
            <person name="Walton J."/>
            <person name="Baboud J."/>
            <person name="Berton D."/>
            <person name="Nicholls M."/>
            <person name="Srinivasan D."/>
            <person name="Raman R."/>
            <person name="Girshik S."/>
            <person name="Kigonya P."/>
            <person name="Alonso S."/>
            <person name="Sanbhadti R."/>
            <person name="Barletta S."/>
            <person name="Pot D."/>
            <person name="Sheth M."/>
            <person name="Demchok J.A."/>
            <person name="Davidsen T."/>
            <person name="Wang Z."/>
            <person name="Yang L."/>
            <person name="Tarnuzzer R.W."/>
            <person name="Zhang J."/>
            <person name="Eley G."/>
            <person name="Ferguson M.L."/>
            <person name="Mills Shaw K.R."/>
            <person name="Guyer M.S."/>
            <person name="Ozenberger B.A."/>
            <person name="Sofia H.J."/>
        </authorList>
    </citation>
    <scope>INVOLVEMENT IN RCC</scope>
</reference>
<reference key="30">
    <citation type="journal article" date="2013" name="Nucleic Acids Res.">
        <title>Histone methyltransferase SETD2 coordinates FACT recruitment with nucleosome dynamics during transcription.</title>
        <authorList>
            <person name="Carvalho S."/>
            <person name="Raposo A.C."/>
            <person name="Martins F.B."/>
            <person name="Grosso A.R."/>
            <person name="Sridhara S.C."/>
            <person name="Rino J."/>
            <person name="Carmo-Fonseca M."/>
            <person name="de Almeida S.F."/>
        </authorList>
    </citation>
    <scope>FUNCTION</scope>
</reference>
<reference key="31">
    <citation type="journal article" date="2014" name="Elife">
        <title>SETD2 is required for DNA double-strand break repair and activation of the p53-mediated checkpoint.</title>
        <authorList>
            <person name="Carvalho S."/>
            <person name="Vitor A.C."/>
            <person name="Sridhara S.C."/>
            <person name="Martins F.B."/>
            <person name="Raposo A.C."/>
            <person name="Desterro J.M."/>
            <person name="Ferreira J."/>
            <person name="de Almeida S.F."/>
        </authorList>
    </citation>
    <scope>FUNCTION</scope>
</reference>
<reference key="32">
    <citation type="journal article" date="2014" name="J. Proteomics">
        <title>An enzyme assisted RP-RPLC approach for in-depth analysis of human liver phosphoproteome.</title>
        <authorList>
            <person name="Bian Y."/>
            <person name="Song C."/>
            <person name="Cheng K."/>
            <person name="Dong M."/>
            <person name="Wang F."/>
            <person name="Huang J."/>
            <person name="Sun D."/>
            <person name="Wang L."/>
            <person name="Ye M."/>
            <person name="Zou H."/>
        </authorList>
    </citation>
    <scope>PHOSPHORYLATION [LARGE SCALE ANALYSIS] AT SER-321; SER-614 AND THR-1853</scope>
    <scope>IDENTIFICATION BY MASS SPECTROMETRY [LARGE SCALE ANALYSIS]</scope>
    <source>
        <tissue>Liver</tissue>
    </source>
</reference>
<reference key="33">
    <citation type="journal article" date="2014" name="Nat. Commun.">
        <title>Mutations in epigenetic regulators including SETD2 are gained during relapse in paediatric acute lymphoblastic leukaemia.</title>
        <authorList>
            <person name="Mar B.G."/>
            <person name="Bullinger L.B."/>
            <person name="McLean K.M."/>
            <person name="Grauman P.V."/>
            <person name="Harris M.H."/>
            <person name="Stevenson K."/>
            <person name="Neuberg D.S."/>
            <person name="Sinha A.U."/>
            <person name="Sallan S.E."/>
            <person name="Silverman L.B."/>
            <person name="Kung A.L."/>
            <person name="Lo Nigro L."/>
            <person name="Ebert B.L."/>
            <person name="Armstrong S.A."/>
        </authorList>
    </citation>
    <scope>INVOLVEMENT IN ALL</scope>
    <scope>VARIANTS ALL ARG-2; GLY-19; ILE-267; PRO-470; ALA-499; 794-TYR--GLU-2564 DEL; PRO-1076; GLY-1093; ALA-1171; GLY-1351; GLU-1365; 1416-GLU--GLU-2564 DEL; ASN-1453; PRO-1609; MET-1663; PRO-1821; ALA-1915; VAL-1920; SER-2361 AND 2546-LYS--GLU-2564 DEL</scope>
</reference>
<reference key="34">
    <citation type="journal article" date="2014" name="Nat. Genet.">
        <title>Identification of functional cooperative mutations of SETD2 in human acute leukemia.</title>
        <authorList>
            <person name="Zhu X."/>
            <person name="He F."/>
            <person name="Zeng H."/>
            <person name="Ling S."/>
            <person name="Chen A."/>
            <person name="Wang Y."/>
            <person name="Yan X."/>
            <person name="Wei W."/>
            <person name="Pang Y."/>
            <person name="Cheng H."/>
            <person name="Hua C."/>
            <person name="Zhang Y."/>
            <person name="Yang X."/>
            <person name="Lu X."/>
            <person name="Cao L."/>
            <person name="Hao L."/>
            <person name="Dong L."/>
            <person name="Zou W."/>
            <person name="Wu J."/>
            <person name="Li X."/>
            <person name="Zheng S."/>
            <person name="Yan J."/>
            <person name="Zhou J."/>
            <person name="Zhang L."/>
            <person name="Mi S."/>
            <person name="Wang X."/>
            <person name="Zhang L."/>
            <person name="Zou Y."/>
            <person name="Chen Y."/>
            <person name="Geng Z."/>
            <person name="Wang J."/>
            <person name="Zhou J."/>
            <person name="Liu X."/>
            <person name="Wang J."/>
            <person name="Yuan W."/>
            <person name="Huang G."/>
            <person name="Cheng T."/>
            <person name="Wang Q.F."/>
        </authorList>
    </citation>
    <scope>INVOLVEMENT IN AML</scope>
    <scope>INVOLVEMENT IN ALL</scope>
    <scope>VARIANTS AML 70-ARG--GLU-2564 DEL; ASN-800; GLY-1397; SER-1804; TRP-2122; 2325-GLN--GLU-2564 DEL AND LEU-2505</scope>
    <scope>VARIANTS ALL SER-226; ILE-761; ASN-1493; 1496-ARG--GLU-2564 DEL; GLN-1654; 2077-ARG--GLU-2564 DEL; ALA-2214 AND 2524-CYS--GLU-2564 DEL</scope>
</reference>
<reference key="35">
    <citation type="journal article" date="2015" name="J. Autism Dev. Disord.">
        <title>SETD2 mutation in a child with autism, intellectual disabilities and epilepsy.</title>
        <authorList>
            <person name="Lumish H.S."/>
            <person name="Wynn J."/>
            <person name="Devinsky O."/>
            <person name="Chung W.K."/>
        </authorList>
    </citation>
    <scope>INVOLVEMENT IN LLS</scope>
</reference>
<reference key="36">
    <citation type="journal article" date="2015" name="Mol. Cell. Proteomics">
        <title>System-wide analysis of SUMOylation dynamics in response to replication stress reveals novel small ubiquitin-like modified target proteins and acceptor lysines relevant for genome stability.</title>
        <authorList>
            <person name="Xiao Z."/>
            <person name="Chang J.G."/>
            <person name="Hendriks I.A."/>
            <person name="Sigurdsson J.O."/>
            <person name="Olsen J.V."/>
            <person name="Vertegaal A.C."/>
        </authorList>
    </citation>
    <scope>SUMOYLATION [LARGE SCALE ANALYSIS] AT LYS-637</scope>
    <scope>IDENTIFICATION BY MASS SPECTROMETRY [LARGE SCALE ANALYSIS]</scope>
</reference>
<reference key="37">
    <citation type="journal article" date="2015" name="Oncogene">
        <title>SETD2 loss-of-function promotes renal cancer branched evolution through replication stress and impaired DNA repair.</title>
        <authorList>
            <person name="Kanu N."/>
            <person name="Groenroos E."/>
            <person name="Martinez P."/>
            <person name="Burrell R.A."/>
            <person name="Yi Goh X."/>
            <person name="Bartkova J."/>
            <person name="Maya-Mendoza A."/>
            <person name="Mistrik M."/>
            <person name="Rowan A.J."/>
            <person name="Patel H."/>
            <person name="Rabinowitz A."/>
            <person name="East P."/>
            <person name="Wilson G."/>
            <person name="Santos C.R."/>
            <person name="McGranahan N."/>
            <person name="Gulati S."/>
            <person name="Gerlinger M."/>
            <person name="Birkbak N.J."/>
            <person name="Joshi T."/>
            <person name="Alexandrov L.B."/>
            <person name="Stratton M.R."/>
            <person name="Powles T."/>
            <person name="Matthews N."/>
            <person name="Bates P.A."/>
            <person name="Stewart A."/>
            <person name="Szallasi Z."/>
            <person name="Larkin J."/>
            <person name="Bartek J."/>
            <person name="Swanton C."/>
        </authorList>
    </citation>
    <scope>INVOLVEMENT IN RCC</scope>
</reference>
<reference key="38">
    <citation type="journal article" date="2016" name="Cell">
        <title>Dual chromatin and cytoskeletal remodeling by SETD2.</title>
        <authorList>
            <person name="Park I.Y."/>
            <person name="Powell R.T."/>
            <person name="Tripathi D.N."/>
            <person name="Dere R."/>
            <person name="Ho T.H."/>
            <person name="Blasius T.L."/>
            <person name="Chiang Y.C."/>
            <person name="Davis I.J."/>
            <person name="Fahey C.C."/>
            <person name="Hacker K.E."/>
            <person name="Verhey K.J."/>
            <person name="Bedford M.T."/>
            <person name="Jonasch E."/>
            <person name="Rathmell W.K."/>
            <person name="Walker C.L."/>
        </authorList>
    </citation>
    <scope>FUNCTION AS ALPHA-TUBULIN METHYLTRANSFERASE</scope>
    <scope>CATALYTIC ACTIVITY</scope>
    <scope>INTERACTION WITH TUBA1A</scope>
</reference>
<reference key="39">
    <citation type="journal article" date="2016" name="J. Med. Genet.">
        <title>SETD2 and DNMT3A screen in the Sotos-like syndrome French cohort.</title>
        <authorList>
            <person name="Tlemsani C."/>
            <person name="Luscan A."/>
            <person name="Leulliot N."/>
            <person name="Bieth E."/>
            <person name="Afenjar A."/>
            <person name="Baujat G."/>
            <person name="Doco-Fenzy M."/>
            <person name="Goldenberg A."/>
            <person name="Lacombe D."/>
            <person name="Lambert L."/>
            <person name="Odent S."/>
            <person name="Pasche J."/>
            <person name="Sigaudy S."/>
            <person name="Buffet A."/>
            <person name="Violle-Poirsier C."/>
            <person name="Briand-Suleau A."/>
            <person name="Laurendeau I."/>
            <person name="Chin M."/>
            <person name="Saugier-Veber P."/>
            <person name="Vidaud D."/>
            <person name="Cormier-Daire V."/>
            <person name="Vidaud M."/>
            <person name="Pasmant E."/>
            <person name="Burglen L."/>
        </authorList>
    </citation>
    <scope>POSSIBLE INVOLVEMENT IN LLS</scope>
    <scope>FUNCTION</scope>
</reference>
<reference key="40">
    <citation type="journal article" date="2017" name="Cell">
        <title>Methyltransferase SETD2-mediated methylation of STAT1 is critical for interferon antiviral activity.</title>
        <authorList>
            <person name="Chen K."/>
            <person name="Liu J."/>
            <person name="Liu S."/>
            <person name="Xia M."/>
            <person name="Zhang X."/>
            <person name="Han D."/>
            <person name="Jiang Y."/>
            <person name="Wang C."/>
            <person name="Cao X."/>
        </authorList>
    </citation>
    <scope>FUNCTION</scope>
    <scope>CATALYTIC ACTIVITY</scope>
    <scope>INTERACTION WITH STAT1</scope>
    <scope>MUTAGENESIS OF ARG-1625 AND CYS-1631</scope>
</reference>
<reference key="41">
    <citation type="journal article" date="2017" name="Nat. Struct. Mol. Biol.">
        <title>Site-specific mapping of the human SUMO proteome reveals co-modification with phosphorylation.</title>
        <authorList>
            <person name="Hendriks I.A."/>
            <person name="Lyon D."/>
            <person name="Young C."/>
            <person name="Jensen L.J."/>
            <person name="Vertegaal A.C."/>
            <person name="Nielsen M.L."/>
        </authorList>
    </citation>
    <scope>SUMOYLATION [LARGE SCALE ANALYSIS] AT LYS-359; LYS-637 AND LYS-776</scope>
    <scope>IDENTIFICATION BY MASS SPECTROMETRY [LARGE SCALE ANALYSIS]</scope>
</reference>
<reference key="42">
    <citation type="journal article" date="2022" name="Nucleic Acids Res.">
        <title>CHD8 suppression impacts on histone H3 lysine 36 trimethylation and alters RNA alternative splicing.</title>
        <authorList>
            <person name="Kerschbamer E."/>
            <person name="Arnoldi M."/>
            <person name="Tripathi T."/>
            <person name="Pellegrini M."/>
            <person name="Maturi S."/>
            <person name="Erdin S."/>
            <person name="Salviato E."/>
            <person name="Di Leva F."/>
            <person name="Sebestyen E."/>
            <person name="Dassi E."/>
            <person name="Zarantonello G."/>
            <person name="Benelli M."/>
            <person name="Campos E."/>
            <person name="Basson M.A."/>
            <person name="Gusella J.F."/>
            <person name="Gustincich S."/>
            <person name="Piazza S."/>
            <person name="Demichelis F."/>
            <person name="Talkowski M.E."/>
            <person name="Ferrari F."/>
            <person name="Biagioli M."/>
        </authorList>
    </citation>
    <scope>INTERACTION WITH HNRNPL</scope>
</reference>
<reference key="43">
    <citation type="journal article" date="2005" name="Proc. Natl. Acad. Sci. U.S.A.">
        <title>Solution structure of the Set2-Rpb1 interacting domain of human Set2 and its interaction with the hyperphosphorylated C-terminal domain of Rpb1.</title>
        <authorList>
            <person name="Li M."/>
            <person name="Phatnani H.P."/>
            <person name="Guan Z."/>
            <person name="Sage H."/>
            <person name="Greenleaf A.L."/>
            <person name="Zhou P."/>
        </authorList>
    </citation>
    <scope>STRUCTURE BY NMR OF 2457-2564</scope>
    <scope>INTERACTION WITH POLR2A</scope>
    <scope>MUTAGENESIS OF ARG-2475; LYS-2476; GLN-2480; PHE-2481; VAL-2483; LYS-2506; ARG-2510; HIS-2514; GLY-2515; GLU-2528 AND GLU-2531</scope>
    <scope>CHARACTERIZATION OF VARIANT AML LEU-2505</scope>
</reference>
<reference evidence="46 47" key="44">
    <citation type="journal article" date="2012" name="J. Am. Chem. Soc.">
        <title>Sinefungin derivatives as inhibitors and structure probes of protein lysine methyltransferase SETD2.</title>
        <authorList>
            <person name="Zheng W."/>
            <person name="Ibanez G."/>
            <person name="Wu H."/>
            <person name="Blum G."/>
            <person name="Zeng H."/>
            <person name="Dong A."/>
            <person name="Li F."/>
            <person name="Hajian T."/>
            <person name="Allali-Hassani A."/>
            <person name="Amaya M.F."/>
            <person name="Siarheyeva A."/>
            <person name="Yu W."/>
            <person name="Brown P.J."/>
            <person name="Schapira M."/>
            <person name="Vedadi M."/>
            <person name="Min J."/>
            <person name="Luo M."/>
        </authorList>
    </citation>
    <scope>X-RAY CRYSTALLOGRAPHY (1.99 ANGSTROMS) OF 1434-1711 IN COMPLEX WITH S-ADENOSYL-L-METHIONINE OR N-PROPYL SINEFUNGIN AND ZINC</scope>
    <scope>FUNCTION</scope>
    <scope>BIOPHYSICOCHEMICAL PROPERTIES</scope>
    <scope>CATALYTIC ACTIVITY</scope>
    <scope>ACTIVITY REGULATION</scope>
    <scope>MUTAGENESIS OF PHE-1668; GLN-1669; ARG-1670 AND TYR-1671</scope>
</reference>
<reference key="45">
    <citation type="journal article" date="2016" name="Genes Dev.">
        <title>Molecular basis for oncohistone H3 recognition by SETD2 methyltransferase.</title>
        <authorList>
            <person name="Yang S."/>
            <person name="Zheng X."/>
            <person name="Lu C."/>
            <person name="Li G.M."/>
            <person name="Allis C.D."/>
            <person name="Li H."/>
        </authorList>
    </citation>
    <scope>X-RAY CRYSTALLOGRAPHY (1.50 ANGSTROMS) OF 1434-1711 IN COMPLEX WITH S-ADENOSYL-L-HOMOCYSTEINE AND ZINC</scope>
    <scope>FUNCTION</scope>
    <scope>CATALYTIC ACTIVITY</scope>
    <scope>DOMAIN</scope>
    <scope>MUTAGENESIS OF PHE-1589; TYR-1604; GLU-1636; THR-1637; PHE-1668 AND TYR-1671</scope>
</reference>
<reference key="46">
    <citation type="journal article" date="2017" name="Sci. Rep.">
        <title>Molecular basis for the role of oncogenic histone mutations in modulating H3K36 methylation.</title>
        <authorList>
            <person name="Zhang Y."/>
            <person name="Shan C.M."/>
            <person name="Wang J."/>
            <person name="Bao K."/>
            <person name="Tong L."/>
            <person name="Jia S."/>
        </authorList>
    </citation>
    <scope>X-RAY CRYSTALLOGRAPHY (2.40 ANGSTROMS) OF 1435-1711 IN COMPLEX WITH S-ADENOSYL-L-HOMOCYSTEINE AND ZINC</scope>
    <scope>DOMAIN</scope>
</reference>
<reference key="47">
    <citation type="journal article" date="2014" name="J. Med. Genet.">
        <title>Mutations in SETD2 cause a novel overgrowth condition.</title>
        <authorList>
            <person name="Luscan A."/>
            <person name="Laurendeau I."/>
            <person name="Malan V."/>
            <person name="Francannet C."/>
            <person name="Odent S."/>
            <person name="Giuliano F."/>
            <person name="Lacombe D."/>
            <person name="Touraine R."/>
            <person name="Vidaud M."/>
            <person name="Pasmant E."/>
            <person name="Cormier-Daire V."/>
        </authorList>
    </citation>
    <scope>VARIANT LLS TRP-1815</scope>
</reference>
<reference key="48">
    <citation type="journal article" date="2015" name="Neuron">
        <title>Targeted DNA Sequencing from Autism Spectrum Disorder Brains Implicates Multiple Genetic Mechanisms.</title>
        <authorList>
            <person name="D'Gama A.M."/>
            <person name="Pochareddy S."/>
            <person name="Li M."/>
            <person name="Jamuar S.S."/>
            <person name="Reiff R.E."/>
            <person name="Lam A.T."/>
            <person name="Sestan N."/>
            <person name="Walsh C.A."/>
        </authorList>
    </citation>
    <scope>VARIANT CYS-488</scope>
</reference>
<reference key="49">
    <citation type="journal article" date="2020" name="Am. J. Med. Genet. A">
        <title>Genotype-phenotype correlation at codon 1740 of SETD2.</title>
        <authorList>
            <person name="Rabin R."/>
            <person name="Radmanesh A."/>
            <person name="Glass I.A."/>
            <person name="Dobyns W.B."/>
            <person name="Aldinger K.A."/>
            <person name="Shieh J.T."/>
            <person name="Romoser S."/>
            <person name="Bombei H."/>
            <person name="Dowsett L."/>
            <person name="Trapane P."/>
            <person name="Bernat J.A."/>
            <person name="Baker J."/>
            <person name="Mendelsohn N.J."/>
            <person name="Popp B."/>
            <person name="Siekmeyer M."/>
            <person name="Sorge I."/>
            <person name="Sansbury F.H."/>
            <person name="Watts P."/>
            <person name="Foulds N.C."/>
            <person name="Burton J."/>
            <person name="Hoganson G."/>
            <person name="Hurst J.A."/>
            <person name="Menzies L."/>
            <person name="Osio D."/>
            <person name="Kerecuk L."/>
            <person name="Cobben J.M."/>
            <person name="Jizi K."/>
            <person name="Jacquemont S."/>
            <person name="Belanger S.A."/>
            <person name="Loehner K."/>
            <person name="Veenstra-Knol H.E."/>
            <person name="Lemmink H.H."/>
            <person name="Keller-Ramey J."/>
            <person name="Wentzensen I.M."/>
            <person name="Punj S."/>
            <person name="McWalter K."/>
            <person name="Lenberg J."/>
            <person name="Ellsworth K.A."/>
            <person name="Radtke K."/>
            <person name="Akbarian S."/>
            <person name="Pappas J."/>
        </authorList>
    </citation>
    <scope>VARIANT RAPAS TRP-1740</scope>
    <scope>VARIANT MRD70 GLN-1740</scope>
    <scope>INVOLVEMENT IN RAPAS AND MRD70</scope>
</reference>
<proteinExistence type="evidence at protein level"/>
<name>SETD2_HUMAN</name>
<gene>
    <name type="primary">SETD2</name>
    <name type="synonym">HIF1</name>
    <name evidence="41" type="synonym">HYPB</name>
    <name evidence="39" type="synonym">KIAA1732</name>
    <name evidence="43" type="synonym">KMT3A</name>
    <name evidence="43 44" type="synonym">SET2</name>
    <name type="ORF">HSPC069</name>
</gene>
<dbReference type="EC" id="2.1.1.359" evidence="16 20 33"/>
<dbReference type="EC" id="2.1.1.-" evidence="34 36"/>
<dbReference type="EMBL" id="AC094020">
    <property type="status" value="NOT_ANNOTATED_CDS"/>
    <property type="molecule type" value="Genomic_DNA"/>
</dbReference>
<dbReference type="EMBL" id="AC127430">
    <property type="status" value="NOT_ANNOTATED_CDS"/>
    <property type="molecule type" value="Genomic_DNA"/>
</dbReference>
<dbReference type="EMBL" id="AK026125">
    <property type="protein sequence ID" value="BAB15367.1"/>
    <property type="status" value="ALT_SEQ"/>
    <property type="molecule type" value="mRNA"/>
</dbReference>
<dbReference type="EMBL" id="AK127782">
    <property type="protein sequence ID" value="BAC87131.1"/>
    <property type="status" value="ALT_INIT"/>
    <property type="molecule type" value="mRNA"/>
</dbReference>
<dbReference type="EMBL" id="AK131371">
    <property type="protein sequence ID" value="BAD18522.1"/>
    <property type="molecule type" value="mRNA"/>
</dbReference>
<dbReference type="EMBL" id="AL713692">
    <property type="protein sequence ID" value="CAD28492.1"/>
    <property type="molecule type" value="mRNA"/>
</dbReference>
<dbReference type="EMBL" id="AL831959">
    <property type="protein sequence ID" value="CAD38601.2"/>
    <property type="status" value="ALT_INIT"/>
    <property type="molecule type" value="mRNA"/>
</dbReference>
<dbReference type="EMBL" id="AL833394">
    <property type="protein sequence ID" value="CAH10589.1"/>
    <property type="molecule type" value="mRNA"/>
</dbReference>
<dbReference type="EMBL" id="AJ238403">
    <property type="protein sequence ID" value="CAC28349.1"/>
    <property type="status" value="ALT_SEQ"/>
    <property type="molecule type" value="mRNA"/>
</dbReference>
<dbReference type="EMBL" id="BC072440">
    <property type="protein sequence ID" value="AAH72440.1"/>
    <property type="status" value="ALT_SEQ"/>
    <property type="molecule type" value="mRNA"/>
</dbReference>
<dbReference type="EMBL" id="BC090954">
    <property type="protein sequence ID" value="AAH90954.1"/>
    <property type="molecule type" value="mRNA"/>
</dbReference>
<dbReference type="EMBL" id="BC117162">
    <property type="protein sequence ID" value="AAI17163.1"/>
    <property type="status" value="ALT_INIT"/>
    <property type="molecule type" value="mRNA"/>
</dbReference>
<dbReference type="EMBL" id="BC117164">
    <property type="protein sequence ID" value="AAI17165.1"/>
    <property type="status" value="ALT_INIT"/>
    <property type="molecule type" value="mRNA"/>
</dbReference>
<dbReference type="EMBL" id="AY576987">
    <property type="protein sequence ID" value="AAT77612.1"/>
    <property type="status" value="ALT_INIT"/>
    <property type="molecule type" value="mRNA"/>
</dbReference>
<dbReference type="EMBL" id="AY576988">
    <property type="protein sequence ID" value="AAT77613.1"/>
    <property type="status" value="ALT_INIT"/>
    <property type="molecule type" value="mRNA"/>
</dbReference>
<dbReference type="EMBL" id="AB051519">
    <property type="protein sequence ID" value="BAB21823.2"/>
    <property type="molecule type" value="mRNA"/>
</dbReference>
<dbReference type="EMBL" id="AF161554">
    <property type="protein sequence ID" value="AAF29041.1"/>
    <property type="status" value="ALT_FRAME"/>
    <property type="molecule type" value="mRNA"/>
</dbReference>
<dbReference type="EMBL" id="AF049103">
    <property type="protein sequence ID" value="AAC26194.1"/>
    <property type="molecule type" value="mRNA"/>
</dbReference>
<dbReference type="EMBL" id="AF049610">
    <property type="protein sequence ID" value="AAC26846.1"/>
    <property type="molecule type" value="mRNA"/>
</dbReference>
<dbReference type="CCDS" id="CCDS2749.2">
    <molecule id="Q9BYW2-1"/>
</dbReference>
<dbReference type="RefSeq" id="NP_054878.5">
    <molecule id="Q9BYW2-1"/>
    <property type="nucleotide sequence ID" value="NM_014159.6"/>
</dbReference>
<dbReference type="PDB" id="2A7O">
    <property type="method" value="NMR"/>
    <property type="chains" value="A=2457-2564"/>
</dbReference>
<dbReference type="PDB" id="2MDC">
    <property type="method" value="NMR"/>
    <property type="chains" value="A=2385-2430"/>
</dbReference>
<dbReference type="PDB" id="2MDI">
    <property type="method" value="NMR"/>
    <property type="chains" value="A=2377-2430"/>
</dbReference>
<dbReference type="PDB" id="2MDJ">
    <property type="method" value="NMR"/>
    <property type="chains" value="A=2377-2430"/>
</dbReference>
<dbReference type="PDB" id="4FMU">
    <property type="method" value="X-ray"/>
    <property type="resolution" value="2.10 A"/>
    <property type="chains" value="A=1434-1711"/>
</dbReference>
<dbReference type="PDB" id="4H12">
    <property type="method" value="X-ray"/>
    <property type="resolution" value="1.99 A"/>
    <property type="chains" value="A=1434-1711"/>
</dbReference>
<dbReference type="PDB" id="5JJY">
    <property type="method" value="X-ray"/>
    <property type="resolution" value="2.05 A"/>
    <property type="chains" value="A=1434-1711"/>
</dbReference>
<dbReference type="PDB" id="5JLB">
    <property type="method" value="X-ray"/>
    <property type="resolution" value="1.50 A"/>
    <property type="chains" value="A=1434-1711"/>
</dbReference>
<dbReference type="PDB" id="5JLE">
    <property type="method" value="X-ray"/>
    <property type="resolution" value="2.40 A"/>
    <property type="chains" value="A=1434-1711"/>
</dbReference>
<dbReference type="PDB" id="5LSS">
    <property type="method" value="X-ray"/>
    <property type="resolution" value="1.79 A"/>
    <property type="chains" value="A=1433-1711"/>
</dbReference>
<dbReference type="PDB" id="5LSX">
    <property type="method" value="X-ray"/>
    <property type="resolution" value="2.90 A"/>
    <property type="chains" value="A=1433-1711"/>
</dbReference>
<dbReference type="PDB" id="5LSY">
    <property type="method" value="X-ray"/>
    <property type="resolution" value="1.62 A"/>
    <property type="chains" value="A=1433-1711"/>
</dbReference>
<dbReference type="PDB" id="5LSZ">
    <property type="method" value="X-ray"/>
    <property type="resolution" value="1.62 A"/>
    <property type="chains" value="A=1433-1711"/>
</dbReference>
<dbReference type="PDB" id="5LT6">
    <property type="method" value="X-ray"/>
    <property type="resolution" value="2.05 A"/>
    <property type="chains" value="A/B=1433-1711"/>
</dbReference>
<dbReference type="PDB" id="5LT7">
    <property type="method" value="X-ray"/>
    <property type="resolution" value="1.51 A"/>
    <property type="chains" value="A=1433-1711"/>
</dbReference>
<dbReference type="PDB" id="5LT8">
    <property type="method" value="X-ray"/>
    <property type="resolution" value="1.57 A"/>
    <property type="chains" value="A=1433-1711"/>
</dbReference>
<dbReference type="PDB" id="5V21">
    <property type="method" value="X-ray"/>
    <property type="resolution" value="2.42 A"/>
    <property type="chains" value="A=1435-1711"/>
</dbReference>
<dbReference type="PDB" id="5V22">
    <property type="method" value="X-ray"/>
    <property type="resolution" value="2.40 A"/>
    <property type="chains" value="A=1435-1711"/>
</dbReference>
<dbReference type="PDB" id="6J9J">
    <property type="method" value="X-ray"/>
    <property type="resolution" value="1.78 A"/>
    <property type="chains" value="A=1447-1703"/>
</dbReference>
<dbReference type="PDB" id="6VDB">
    <property type="method" value="X-ray"/>
    <property type="resolution" value="2.30 A"/>
    <property type="chains" value="A=1433-1711"/>
</dbReference>
<dbReference type="PDB" id="7EA8">
    <property type="method" value="EM"/>
    <property type="resolution" value="3.10 A"/>
    <property type="chains" value="L=1452-1696"/>
</dbReference>
<dbReference type="PDB" id="7EVR">
    <property type="method" value="X-ray"/>
    <property type="resolution" value="1.80 A"/>
    <property type="chains" value="B/D=2167-2192"/>
</dbReference>
<dbReference type="PDB" id="7EVS">
    <property type="method" value="X-ray"/>
    <property type="resolution" value="1.60 A"/>
    <property type="chains" value="C/D=2180-2192"/>
</dbReference>
<dbReference type="PDB" id="7LZB">
    <property type="method" value="X-ray"/>
    <property type="resolution" value="2.28 A"/>
    <property type="chains" value="A=1434-1711"/>
</dbReference>
<dbReference type="PDB" id="7LZD">
    <property type="method" value="X-ray"/>
    <property type="resolution" value="1.80 A"/>
    <property type="chains" value="A=1434-1711"/>
</dbReference>
<dbReference type="PDB" id="7LZF">
    <property type="method" value="X-ray"/>
    <property type="resolution" value="2.47 A"/>
    <property type="chains" value="A=1434-1711"/>
</dbReference>
<dbReference type="PDB" id="7TY2">
    <property type="method" value="X-ray"/>
    <property type="resolution" value="2.44 A"/>
    <property type="chains" value="A=1434-1711"/>
</dbReference>
<dbReference type="PDB" id="7TY3">
    <property type="method" value="X-ray"/>
    <property type="resolution" value="2.30 A"/>
    <property type="chains" value="A=1434-1711"/>
</dbReference>
<dbReference type="PDB" id="8Q5P">
    <property type="method" value="X-ray"/>
    <property type="resolution" value="1.81 A"/>
    <property type="chains" value="A=1433-1711"/>
</dbReference>
<dbReference type="PDB" id="8RZU">
    <property type="method" value="X-ray"/>
    <property type="resolution" value="2.19 A"/>
    <property type="chains" value="A=1433-1711"/>
</dbReference>
<dbReference type="PDB" id="9EGZ">
    <property type="method" value="EM"/>
    <property type="resolution" value="2.90 A"/>
    <property type="chains" value="l=1435-2564"/>
</dbReference>
<dbReference type="PDB" id="9EH0">
    <property type="method" value="EM"/>
    <property type="resolution" value="3.60 A"/>
    <property type="chains" value="l=1435-2564"/>
</dbReference>
<dbReference type="PDB" id="9EH1">
    <property type="method" value="EM"/>
    <property type="resolution" value="3.10 A"/>
    <property type="chains" value="l=1452-2040"/>
</dbReference>
<dbReference type="PDB" id="9EH2">
    <property type="method" value="EM"/>
    <property type="resolution" value="3.10 A"/>
    <property type="chains" value="l=1435-2564"/>
</dbReference>
<dbReference type="PDBsum" id="2A7O"/>
<dbReference type="PDBsum" id="2MDC"/>
<dbReference type="PDBsum" id="2MDI"/>
<dbReference type="PDBsum" id="2MDJ"/>
<dbReference type="PDBsum" id="4FMU"/>
<dbReference type="PDBsum" id="4H12"/>
<dbReference type="PDBsum" id="5JJY"/>
<dbReference type="PDBsum" id="5JLB"/>
<dbReference type="PDBsum" id="5JLE"/>
<dbReference type="PDBsum" id="5LSS"/>
<dbReference type="PDBsum" id="5LSX"/>
<dbReference type="PDBsum" id="5LSY"/>
<dbReference type="PDBsum" id="5LSZ"/>
<dbReference type="PDBsum" id="5LT6"/>
<dbReference type="PDBsum" id="5LT7"/>
<dbReference type="PDBsum" id="5LT8"/>
<dbReference type="PDBsum" id="5V21"/>
<dbReference type="PDBsum" id="5V22"/>
<dbReference type="PDBsum" id="6J9J"/>
<dbReference type="PDBsum" id="6VDB"/>
<dbReference type="PDBsum" id="7EA8"/>
<dbReference type="PDBsum" id="7EVR"/>
<dbReference type="PDBsum" id="7EVS"/>
<dbReference type="PDBsum" id="7LZB"/>
<dbReference type="PDBsum" id="7LZD"/>
<dbReference type="PDBsum" id="7LZF"/>
<dbReference type="PDBsum" id="7TY2"/>
<dbReference type="PDBsum" id="7TY3"/>
<dbReference type="PDBsum" id="8Q5P"/>
<dbReference type="PDBsum" id="8RZU"/>
<dbReference type="PDBsum" id="9EGZ"/>
<dbReference type="PDBsum" id="9EH0"/>
<dbReference type="PDBsum" id="9EH1"/>
<dbReference type="PDBsum" id="9EH2"/>
<dbReference type="BMRB" id="Q9BYW2"/>
<dbReference type="EMDB" id="EMD-31040"/>
<dbReference type="EMDB" id="EMD-48041"/>
<dbReference type="EMDB" id="EMD-48042"/>
<dbReference type="EMDB" id="EMD-48043"/>
<dbReference type="EMDB" id="EMD-48044"/>
<dbReference type="SMR" id="Q9BYW2"/>
<dbReference type="BioGRID" id="118845">
    <property type="interactions" value="141"/>
</dbReference>
<dbReference type="CORUM" id="Q9BYW2"/>
<dbReference type="FunCoup" id="Q9BYW2">
    <property type="interactions" value="4518"/>
</dbReference>
<dbReference type="IntAct" id="Q9BYW2">
    <property type="interactions" value="125"/>
</dbReference>
<dbReference type="MINT" id="Q9BYW2"/>
<dbReference type="STRING" id="9606.ENSP00000386759"/>
<dbReference type="BindingDB" id="Q9BYW2"/>
<dbReference type="ChEMBL" id="CHEMBL3108647"/>
<dbReference type="GlyGen" id="Q9BYW2">
    <property type="glycosylation" value="4 sites, 1 O-linked glycan (2 sites)"/>
</dbReference>
<dbReference type="iPTMnet" id="Q9BYW2"/>
<dbReference type="PhosphoSitePlus" id="Q9BYW2"/>
<dbReference type="SwissPalm" id="Q9BYW2"/>
<dbReference type="BioMuta" id="SETD2"/>
<dbReference type="DMDM" id="296452963"/>
<dbReference type="OGP" id="Q9BYW2"/>
<dbReference type="jPOST" id="Q9BYW2"/>
<dbReference type="MassIVE" id="Q9BYW2"/>
<dbReference type="PaxDb" id="9606-ENSP00000386759"/>
<dbReference type="PeptideAtlas" id="Q9BYW2"/>
<dbReference type="ProteomicsDB" id="79730">
    <molecule id="Q9BYW2-1"/>
</dbReference>
<dbReference type="ProteomicsDB" id="79731">
    <molecule id="Q9BYW2-2"/>
</dbReference>
<dbReference type="ProteomicsDB" id="79732">
    <molecule id="Q9BYW2-3"/>
</dbReference>
<dbReference type="Pumba" id="Q9BYW2"/>
<dbReference type="ABCD" id="Q9BYW2">
    <property type="antibodies" value="1 sequenced antibody"/>
</dbReference>
<dbReference type="Antibodypedia" id="29842">
    <property type="antibodies" value="349 antibodies from 33 providers"/>
</dbReference>
<dbReference type="DNASU" id="29072"/>
<dbReference type="Ensembl" id="ENST00000409792.4">
    <molecule id="Q9BYW2-1"/>
    <property type="protein sequence ID" value="ENSP00000386759.3"/>
    <property type="gene ID" value="ENSG00000181555.22"/>
</dbReference>
<dbReference type="GeneID" id="29072"/>
<dbReference type="KEGG" id="hsa:29072"/>
<dbReference type="MANE-Select" id="ENST00000409792.4">
    <property type="protein sequence ID" value="ENSP00000386759.3"/>
    <property type="RefSeq nucleotide sequence ID" value="NM_014159.7"/>
    <property type="RefSeq protein sequence ID" value="NP_054878.5"/>
</dbReference>
<dbReference type="UCSC" id="uc003cqs.4">
    <molecule id="Q9BYW2-1"/>
    <property type="organism name" value="human"/>
</dbReference>
<dbReference type="AGR" id="HGNC:18420"/>
<dbReference type="CTD" id="29072"/>
<dbReference type="DisGeNET" id="29072"/>
<dbReference type="GeneCards" id="SETD2"/>
<dbReference type="GeneReviews" id="SETD2"/>
<dbReference type="HGNC" id="HGNC:18420">
    <property type="gene designation" value="SETD2"/>
</dbReference>
<dbReference type="HPA" id="ENSG00000181555">
    <property type="expression patterns" value="Low tissue specificity"/>
</dbReference>
<dbReference type="MalaCards" id="SETD2"/>
<dbReference type="MIM" id="144700">
    <property type="type" value="phenotype"/>
</dbReference>
<dbReference type="MIM" id="601626">
    <property type="type" value="phenotype"/>
</dbReference>
<dbReference type="MIM" id="612778">
    <property type="type" value="gene"/>
</dbReference>
<dbReference type="MIM" id="613065">
    <property type="type" value="phenotype"/>
</dbReference>
<dbReference type="MIM" id="616831">
    <property type="type" value="phenotype"/>
</dbReference>
<dbReference type="MIM" id="620155">
    <property type="type" value="phenotype"/>
</dbReference>
<dbReference type="MIM" id="620157">
    <property type="type" value="phenotype"/>
</dbReference>
<dbReference type="neXtProt" id="NX_Q9BYW2"/>
<dbReference type="OpenTargets" id="ENSG00000181555"/>
<dbReference type="Orphanet" id="597738">
    <property type="disease" value="Luscan-Lumish syndrome"/>
</dbReference>
<dbReference type="Orphanet" id="597743">
    <property type="disease" value="SETD2-related microcephaly-severe intellectual disability-multiple congenital anomalies syndrome"/>
</dbReference>
<dbReference type="PharmGKB" id="PA143485612"/>
<dbReference type="VEuPathDB" id="HostDB:ENSG00000181555"/>
<dbReference type="eggNOG" id="KOG4442">
    <property type="taxonomic scope" value="Eukaryota"/>
</dbReference>
<dbReference type="GeneTree" id="ENSGT00940000160086"/>
<dbReference type="HOGENOM" id="CLU_000810_1_0_1"/>
<dbReference type="InParanoid" id="Q9BYW2"/>
<dbReference type="OMA" id="RTCFPME"/>
<dbReference type="OrthoDB" id="422362at2759"/>
<dbReference type="PAN-GO" id="Q9BYW2">
    <property type="GO annotations" value="5 GO annotations based on evolutionary models"/>
</dbReference>
<dbReference type="PhylomeDB" id="Q9BYW2"/>
<dbReference type="TreeFam" id="TF106477"/>
<dbReference type="BioCyc" id="MetaCyc:HS17695-MONOMER"/>
<dbReference type="BRENDA" id="2.1.1.359">
    <property type="organism ID" value="2681"/>
</dbReference>
<dbReference type="PathwayCommons" id="Q9BYW2"/>
<dbReference type="Reactome" id="R-HSA-3214841">
    <property type="pathway name" value="PKMTs methylate histone lysines"/>
</dbReference>
<dbReference type="SignaLink" id="Q9BYW2"/>
<dbReference type="SIGNOR" id="Q9BYW2"/>
<dbReference type="BioGRID-ORCS" id="29072">
    <property type="hits" value="309 hits in 1183 CRISPR screens"/>
</dbReference>
<dbReference type="ChiTaRS" id="SETD2">
    <property type="organism name" value="human"/>
</dbReference>
<dbReference type="EvolutionaryTrace" id="Q9BYW2"/>
<dbReference type="GeneWiki" id="SETD2"/>
<dbReference type="GenomeRNAi" id="29072"/>
<dbReference type="Pharos" id="Q9BYW2">
    <property type="development level" value="Tchem"/>
</dbReference>
<dbReference type="PRO" id="PR:Q9BYW2"/>
<dbReference type="Proteomes" id="UP000005640">
    <property type="component" value="Chromosome 3"/>
</dbReference>
<dbReference type="RNAct" id="Q9BYW2">
    <property type="molecule type" value="protein"/>
</dbReference>
<dbReference type="Bgee" id="ENSG00000181555">
    <property type="expression patterns" value="Expressed in tendon of biceps brachii and 210 other cell types or tissues"/>
</dbReference>
<dbReference type="ExpressionAtlas" id="Q9BYW2">
    <property type="expression patterns" value="baseline and differential"/>
</dbReference>
<dbReference type="GO" id="GO:0005694">
    <property type="term" value="C:chromosome"/>
    <property type="evidence" value="ECO:0000250"/>
    <property type="project" value="UniProtKB"/>
</dbReference>
<dbReference type="GO" id="GO:0005737">
    <property type="term" value="C:cytoplasm"/>
    <property type="evidence" value="ECO:0000305"/>
    <property type="project" value="UniProt"/>
</dbReference>
<dbReference type="GO" id="GO:0005654">
    <property type="term" value="C:nucleoplasm"/>
    <property type="evidence" value="ECO:0000304"/>
    <property type="project" value="Reactome"/>
</dbReference>
<dbReference type="GO" id="GO:0005634">
    <property type="term" value="C:nucleus"/>
    <property type="evidence" value="ECO:0000250"/>
    <property type="project" value="UniProtKB"/>
</dbReference>
<dbReference type="GO" id="GO:0043014">
    <property type="term" value="F:alpha-tubulin binding"/>
    <property type="evidence" value="ECO:0000314"/>
    <property type="project" value="UniProtKB"/>
</dbReference>
<dbReference type="GO" id="GO:0140938">
    <property type="term" value="F:histone H3 methyltransferase activity"/>
    <property type="evidence" value="ECO:0000304"/>
    <property type="project" value="Reactome"/>
</dbReference>
<dbReference type="GO" id="GO:0046975">
    <property type="term" value="F:histone H3K36 methyltransferase activity"/>
    <property type="evidence" value="ECO:0000314"/>
    <property type="project" value="UniProtKB"/>
</dbReference>
<dbReference type="GO" id="GO:0140955">
    <property type="term" value="F:histone H3K36 trimethyltransferase activity"/>
    <property type="evidence" value="ECO:0007669"/>
    <property type="project" value="UniProtKB-EC"/>
</dbReference>
<dbReference type="GO" id="GO:0046872">
    <property type="term" value="F:metal ion binding"/>
    <property type="evidence" value="ECO:0007669"/>
    <property type="project" value="UniProtKB-KW"/>
</dbReference>
<dbReference type="GO" id="GO:0016279">
    <property type="term" value="F:protein-lysine N-methyltransferase activity"/>
    <property type="evidence" value="ECO:0000314"/>
    <property type="project" value="UniProtKB"/>
</dbReference>
<dbReference type="GO" id="GO:0051607">
    <property type="term" value="P:defense response to virus"/>
    <property type="evidence" value="ECO:0000314"/>
    <property type="project" value="UniProtKB"/>
</dbReference>
<dbReference type="GO" id="GO:0035987">
    <property type="term" value="P:endodermal cell differentiation"/>
    <property type="evidence" value="ECO:0000250"/>
    <property type="project" value="UniProtKB"/>
</dbReference>
<dbReference type="GO" id="GO:1902850">
    <property type="term" value="P:microtubule cytoskeleton organization involved in mitosis"/>
    <property type="evidence" value="ECO:0000314"/>
    <property type="project" value="UniProtKB"/>
</dbReference>
<dbReference type="GO" id="GO:0006298">
    <property type="term" value="P:mismatch repair"/>
    <property type="evidence" value="ECO:0000315"/>
    <property type="project" value="UniProtKB"/>
</dbReference>
<dbReference type="GO" id="GO:0034728">
    <property type="term" value="P:nucleosome organization"/>
    <property type="evidence" value="ECO:0000315"/>
    <property type="project" value="UniProtKB"/>
</dbReference>
<dbReference type="GO" id="GO:0018023">
    <property type="term" value="P:peptidyl-lysine trimethylation"/>
    <property type="evidence" value="ECO:0000314"/>
    <property type="project" value="UniProtKB"/>
</dbReference>
<dbReference type="GO" id="GO:0010508">
    <property type="term" value="P:positive regulation of autophagy"/>
    <property type="evidence" value="ECO:0000314"/>
    <property type="project" value="UniProt"/>
</dbReference>
<dbReference type="GO" id="GO:0032727">
    <property type="term" value="P:positive regulation of interferon-alpha production"/>
    <property type="evidence" value="ECO:0000314"/>
    <property type="project" value="UniProtKB"/>
</dbReference>
<dbReference type="GO" id="GO:0045778">
    <property type="term" value="P:positive regulation of ossification"/>
    <property type="evidence" value="ECO:0007669"/>
    <property type="project" value="Ensembl"/>
</dbReference>
<dbReference type="GO" id="GO:0032465">
    <property type="term" value="P:regulation of cytokinesis"/>
    <property type="evidence" value="ECO:0000314"/>
    <property type="project" value="UniProtKB"/>
</dbReference>
<dbReference type="GO" id="GO:0006355">
    <property type="term" value="P:regulation of DNA-templated transcription"/>
    <property type="evidence" value="ECO:0007669"/>
    <property type="project" value="InterPro"/>
</dbReference>
<dbReference type="GO" id="GO:0010569">
    <property type="term" value="P:regulation of double-strand break repair via homologous recombination"/>
    <property type="evidence" value="ECO:0000314"/>
    <property type="project" value="UniProtKB"/>
</dbReference>
<dbReference type="GO" id="GO:0010468">
    <property type="term" value="P:regulation of gene expression"/>
    <property type="evidence" value="ECO:0000318"/>
    <property type="project" value="GO_Central"/>
</dbReference>
<dbReference type="GO" id="GO:0010793">
    <property type="term" value="P:regulation of mRNA export from nucleus"/>
    <property type="evidence" value="ECO:0000315"/>
    <property type="project" value="UniProtKB"/>
</dbReference>
<dbReference type="GO" id="GO:1905634">
    <property type="term" value="P:regulation of protein localization to chromatin"/>
    <property type="evidence" value="ECO:0000314"/>
    <property type="project" value="UniProtKB"/>
</dbReference>
<dbReference type="GO" id="GO:0043279">
    <property type="term" value="P:response to alkaloid"/>
    <property type="evidence" value="ECO:0007669"/>
    <property type="project" value="Ensembl"/>
</dbReference>
<dbReference type="GO" id="GO:0010038">
    <property type="term" value="P:response to metal ion"/>
    <property type="evidence" value="ECO:0007669"/>
    <property type="project" value="Ensembl"/>
</dbReference>
<dbReference type="GO" id="GO:0034340">
    <property type="term" value="P:response to type I interferon"/>
    <property type="evidence" value="ECO:0000314"/>
    <property type="project" value="UniProtKB"/>
</dbReference>
<dbReference type="GO" id="GO:0048863">
    <property type="term" value="P:stem cell differentiation"/>
    <property type="evidence" value="ECO:0000250"/>
    <property type="project" value="UniProtKB"/>
</dbReference>
<dbReference type="GO" id="GO:0006368">
    <property type="term" value="P:transcription elongation by RNA polymerase II"/>
    <property type="evidence" value="ECO:0000315"/>
    <property type="project" value="UniProtKB"/>
</dbReference>
<dbReference type="CDD" id="cd19172">
    <property type="entry name" value="SET_SETD2"/>
    <property type="match status" value="1"/>
</dbReference>
<dbReference type="CDD" id="cd00201">
    <property type="entry name" value="WW"/>
    <property type="match status" value="1"/>
</dbReference>
<dbReference type="FunFam" id="1.10.1740.100:FF:000001">
    <property type="entry name" value="Histone-lysine N-methyltransferase"/>
    <property type="match status" value="1"/>
</dbReference>
<dbReference type="FunFam" id="1.20.930.10:FF:000004">
    <property type="entry name" value="Histone-lysine N-methyltransferase"/>
    <property type="match status" value="1"/>
</dbReference>
<dbReference type="FunFam" id="2.170.270.10:FF:000016">
    <property type="entry name" value="Histone-lysine N-methyltransferase"/>
    <property type="match status" value="1"/>
</dbReference>
<dbReference type="Gene3D" id="2.20.70.10">
    <property type="match status" value="1"/>
</dbReference>
<dbReference type="Gene3D" id="1.20.930.10">
    <property type="entry name" value="Conserved domain common to transcription factors TFIIS, elongin A, CRSP70"/>
    <property type="match status" value="1"/>
</dbReference>
<dbReference type="Gene3D" id="2.170.270.10">
    <property type="entry name" value="SET domain"/>
    <property type="match status" value="1"/>
</dbReference>
<dbReference type="Gene3D" id="1.10.1740.100">
    <property type="entry name" value="Set2, Rpb1 interacting domain"/>
    <property type="match status" value="1"/>
</dbReference>
<dbReference type="InterPro" id="IPR006560">
    <property type="entry name" value="AWS_dom"/>
</dbReference>
<dbReference type="InterPro" id="IPR003616">
    <property type="entry name" value="Post-SET_dom"/>
</dbReference>
<dbReference type="InterPro" id="IPR001214">
    <property type="entry name" value="SET_dom"/>
</dbReference>
<dbReference type="InterPro" id="IPR046341">
    <property type="entry name" value="SET_dom_sf"/>
</dbReference>
<dbReference type="InterPro" id="IPR044437">
    <property type="entry name" value="SETD2/Set2_SET"/>
</dbReference>
<dbReference type="InterPro" id="IPR042294">
    <property type="entry name" value="SETD2_animal"/>
</dbReference>
<dbReference type="InterPro" id="IPR013257">
    <property type="entry name" value="SRI"/>
</dbReference>
<dbReference type="InterPro" id="IPR038190">
    <property type="entry name" value="SRI_sf"/>
</dbReference>
<dbReference type="InterPro" id="IPR035441">
    <property type="entry name" value="TFIIS/LEDGF_dom_sf"/>
</dbReference>
<dbReference type="InterPro" id="IPR001202">
    <property type="entry name" value="WW_dom"/>
</dbReference>
<dbReference type="InterPro" id="IPR036020">
    <property type="entry name" value="WW_dom_sf"/>
</dbReference>
<dbReference type="PANTHER" id="PTHR46711">
    <property type="entry name" value="HISTONE-LYSINE N-METHYLTRANSFERASE SETD2"/>
    <property type="match status" value="1"/>
</dbReference>
<dbReference type="PANTHER" id="PTHR46711:SF1">
    <property type="entry name" value="HISTONE-LYSINE N-METHYLTRANSFERASE SETD2"/>
    <property type="match status" value="1"/>
</dbReference>
<dbReference type="Pfam" id="PF17907">
    <property type="entry name" value="AWS"/>
    <property type="match status" value="1"/>
</dbReference>
<dbReference type="Pfam" id="PF00856">
    <property type="entry name" value="SET"/>
    <property type="match status" value="1"/>
</dbReference>
<dbReference type="Pfam" id="PF08236">
    <property type="entry name" value="SRI"/>
    <property type="match status" value="1"/>
</dbReference>
<dbReference type="Pfam" id="PF00397">
    <property type="entry name" value="WW"/>
    <property type="match status" value="1"/>
</dbReference>
<dbReference type="SMART" id="SM00570">
    <property type="entry name" value="AWS"/>
    <property type="match status" value="1"/>
</dbReference>
<dbReference type="SMART" id="SM00508">
    <property type="entry name" value="PostSET"/>
    <property type="match status" value="1"/>
</dbReference>
<dbReference type="SMART" id="SM00317">
    <property type="entry name" value="SET"/>
    <property type="match status" value="1"/>
</dbReference>
<dbReference type="SMART" id="SM00456">
    <property type="entry name" value="WW"/>
    <property type="match status" value="1"/>
</dbReference>
<dbReference type="SUPFAM" id="SSF82199">
    <property type="entry name" value="SET domain"/>
    <property type="match status" value="1"/>
</dbReference>
<dbReference type="SUPFAM" id="SSF51045">
    <property type="entry name" value="WW domain"/>
    <property type="match status" value="1"/>
</dbReference>
<dbReference type="PROSITE" id="PS51215">
    <property type="entry name" value="AWS"/>
    <property type="match status" value="1"/>
</dbReference>
<dbReference type="PROSITE" id="PS50868">
    <property type="entry name" value="POST_SET"/>
    <property type="match status" value="1"/>
</dbReference>
<dbReference type="PROSITE" id="PS50280">
    <property type="entry name" value="SET"/>
    <property type="match status" value="1"/>
</dbReference>
<dbReference type="PROSITE" id="PS01159">
    <property type="entry name" value="WW_DOMAIN_1"/>
    <property type="match status" value="1"/>
</dbReference>
<dbReference type="PROSITE" id="PS50020">
    <property type="entry name" value="WW_DOMAIN_2"/>
    <property type="match status" value="1"/>
</dbReference>
<accession>Q9BYW2</accession>
<accession>O75397</accession>
<accession>O75405</accession>
<accession>Q17RW8</accession>
<accession>Q5BKS9</accession>
<accession>Q5QGN2</accession>
<accession>Q69YI5</accession>
<accession>Q6IN64</accession>
<accession>Q6ZN53</accession>
<accession>Q6ZS25</accession>
<accession>Q8N3R0</accession>
<accession>Q8TCN0</accession>
<accession>Q9C0D1</accession>
<accession>Q9H696</accession>
<accession>Q9NZW9</accession>
<feature type="chain" id="PRO_0000252367" description="Histone-lysine N-methyltransferase SETD2">
    <location>
        <begin position="1"/>
        <end position="2564"/>
    </location>
</feature>
<feature type="domain" description="AWS" evidence="6">
    <location>
        <begin position="1494"/>
        <end position="1548"/>
    </location>
</feature>
<feature type="domain" description="SET" evidence="4">
    <location>
        <begin position="1550"/>
        <end position="1667"/>
    </location>
</feature>
<feature type="domain" description="Post-SET" evidence="3">
    <location>
        <begin position="1674"/>
        <end position="1690"/>
    </location>
</feature>
<feature type="domain" description="WW" evidence="5">
    <location>
        <begin position="2389"/>
        <end position="2422"/>
    </location>
</feature>
<feature type="region of interest" description="Disordered" evidence="7">
    <location>
        <begin position="1"/>
        <end position="30"/>
    </location>
</feature>
<feature type="region of interest" description="Disordered" evidence="7">
    <location>
        <begin position="180"/>
        <end position="211"/>
    </location>
</feature>
<feature type="region of interest" description="Disordered" evidence="7">
    <location>
        <begin position="272"/>
        <end position="561"/>
    </location>
</feature>
<feature type="region of interest" description="Disordered" evidence="7">
    <location>
        <begin position="607"/>
        <end position="626"/>
    </location>
</feature>
<feature type="region of interest" description="Disordered" evidence="7">
    <location>
        <begin position="964"/>
        <end position="995"/>
    </location>
</feature>
<feature type="region of interest" description="Disordered" evidence="7">
    <location>
        <begin position="1036"/>
        <end position="1101"/>
    </location>
</feature>
<feature type="region of interest" description="Disordered" evidence="7">
    <location>
        <begin position="1133"/>
        <end position="1233"/>
    </location>
</feature>
<feature type="region of interest" description="Disordered" evidence="7">
    <location>
        <begin position="1264"/>
        <end position="1352"/>
    </location>
</feature>
<feature type="region of interest" description="Disordered" evidence="7">
    <location>
        <begin position="1393"/>
        <end position="1443"/>
    </location>
</feature>
<feature type="region of interest" description="Interaction with TUBA1A" evidence="34">
    <location>
        <begin position="1418"/>
        <end position="1714"/>
    </location>
</feature>
<feature type="region of interest" description="Disordered" evidence="7">
    <location>
        <begin position="1831"/>
        <end position="1872"/>
    </location>
</feature>
<feature type="region of interest" description="Disordered" evidence="7">
    <location>
        <begin position="1921"/>
        <end position="2142"/>
    </location>
</feature>
<feature type="region of interest" description="Low charge region" evidence="12">
    <location>
        <begin position="2137"/>
        <end position="2366"/>
    </location>
</feature>
<feature type="region of interest" description="Disordered" evidence="7">
    <location>
        <begin position="2439"/>
        <end position="2465"/>
    </location>
</feature>
<feature type="region of interest" description="Interaction with POLR2A" evidence="13">
    <location>
        <begin position="2457"/>
        <end position="2564"/>
    </location>
</feature>
<feature type="coiled-coil region" evidence="2">
    <location>
        <begin position="2117"/>
        <end position="2146"/>
    </location>
</feature>
<feature type="compositionally biased region" description="Pro residues" evidence="7">
    <location>
        <begin position="1"/>
        <end position="11"/>
    </location>
</feature>
<feature type="compositionally biased region" description="Basic and acidic residues" evidence="7">
    <location>
        <begin position="17"/>
        <end position="30"/>
    </location>
</feature>
<feature type="compositionally biased region" description="Pro residues" evidence="7">
    <location>
        <begin position="187"/>
        <end position="197"/>
    </location>
</feature>
<feature type="compositionally biased region" description="Low complexity" evidence="7">
    <location>
        <begin position="198"/>
        <end position="207"/>
    </location>
</feature>
<feature type="compositionally biased region" description="Basic and acidic residues" evidence="7">
    <location>
        <begin position="278"/>
        <end position="290"/>
    </location>
</feature>
<feature type="compositionally biased region" description="Basic and acidic residues" evidence="7">
    <location>
        <begin position="335"/>
        <end position="400"/>
    </location>
</feature>
<feature type="compositionally biased region" description="Basic and acidic residues" evidence="7">
    <location>
        <begin position="421"/>
        <end position="432"/>
    </location>
</feature>
<feature type="compositionally biased region" description="Basic and acidic residues" evidence="7">
    <location>
        <begin position="439"/>
        <end position="467"/>
    </location>
</feature>
<feature type="compositionally biased region" description="Basic and acidic residues" evidence="7">
    <location>
        <begin position="479"/>
        <end position="528"/>
    </location>
</feature>
<feature type="compositionally biased region" description="Polar residues" evidence="7">
    <location>
        <begin position="616"/>
        <end position="625"/>
    </location>
</feature>
<feature type="compositionally biased region" description="Basic and acidic residues" evidence="7">
    <location>
        <begin position="971"/>
        <end position="994"/>
    </location>
</feature>
<feature type="compositionally biased region" description="Acidic residues" evidence="7">
    <location>
        <begin position="1045"/>
        <end position="1058"/>
    </location>
</feature>
<feature type="compositionally biased region" description="Low complexity" evidence="7">
    <location>
        <begin position="1084"/>
        <end position="1095"/>
    </location>
</feature>
<feature type="compositionally biased region" description="Polar residues" evidence="7">
    <location>
        <begin position="1162"/>
        <end position="1171"/>
    </location>
</feature>
<feature type="compositionally biased region" description="Basic and acidic residues" evidence="7">
    <location>
        <begin position="1172"/>
        <end position="1191"/>
    </location>
</feature>
<feature type="compositionally biased region" description="Polar residues" evidence="7">
    <location>
        <begin position="1215"/>
        <end position="1225"/>
    </location>
</feature>
<feature type="compositionally biased region" description="Polar residues" evidence="7">
    <location>
        <begin position="1265"/>
        <end position="1276"/>
    </location>
</feature>
<feature type="compositionally biased region" description="Basic and acidic residues" evidence="7">
    <location>
        <begin position="1393"/>
        <end position="1403"/>
    </location>
</feature>
<feature type="compositionally biased region" description="Basic and acidic residues" evidence="7">
    <location>
        <begin position="1421"/>
        <end position="1431"/>
    </location>
</feature>
<feature type="compositionally biased region" description="Polar residues" evidence="7">
    <location>
        <begin position="1844"/>
        <end position="1867"/>
    </location>
</feature>
<feature type="compositionally biased region" description="Low complexity" evidence="7">
    <location>
        <begin position="1924"/>
        <end position="1935"/>
    </location>
</feature>
<feature type="compositionally biased region" description="Basic and acidic residues" evidence="7">
    <location>
        <begin position="1960"/>
        <end position="1972"/>
    </location>
</feature>
<feature type="compositionally biased region" description="Acidic residues" evidence="7">
    <location>
        <begin position="1973"/>
        <end position="1990"/>
    </location>
</feature>
<feature type="compositionally biased region" description="Basic and acidic residues" evidence="7">
    <location>
        <begin position="1991"/>
        <end position="2004"/>
    </location>
</feature>
<feature type="compositionally biased region" description="Basic and acidic residues" evidence="7">
    <location>
        <begin position="2014"/>
        <end position="2046"/>
    </location>
</feature>
<feature type="compositionally biased region" description="Basic and acidic residues" evidence="7">
    <location>
        <begin position="2059"/>
        <end position="2072"/>
    </location>
</feature>
<feature type="compositionally biased region" description="Basic and acidic residues" evidence="7">
    <location>
        <begin position="2090"/>
        <end position="2100"/>
    </location>
</feature>
<feature type="compositionally biased region" description="Basic and acidic residues" evidence="7">
    <location>
        <begin position="2111"/>
        <end position="2135"/>
    </location>
</feature>
<feature type="binding site" evidence="20 33 35 46 47 48 49 50 51 52">
    <location>
        <position position="1499"/>
    </location>
    <ligand>
        <name>Zn(2+)</name>
        <dbReference type="ChEBI" id="CHEBI:29105"/>
        <label>1</label>
    </ligand>
</feature>
<feature type="binding site" evidence="20 33 35 46 47 48 49 50 51 52">
    <location>
        <position position="1501"/>
    </location>
    <ligand>
        <name>Zn(2+)</name>
        <dbReference type="ChEBI" id="CHEBI:29105"/>
        <label>1</label>
    </ligand>
</feature>
<feature type="binding site" evidence="20 33 35 46 47 48 49 50 51 52">
    <location>
        <position position="1516"/>
    </location>
    <ligand>
        <name>Zn(2+)</name>
        <dbReference type="ChEBI" id="CHEBI:29105"/>
        <label>1</label>
    </ligand>
</feature>
<feature type="binding site" evidence="20 33 35 46 47 48 49 50 51 52">
    <location>
        <position position="1516"/>
    </location>
    <ligand>
        <name>Zn(2+)</name>
        <dbReference type="ChEBI" id="CHEBI:29105"/>
        <label>2</label>
    </ligand>
</feature>
<feature type="binding site" evidence="20 33 35 46 47 48 49 50 51 52">
    <location>
        <position position="1520"/>
    </location>
    <ligand>
        <name>Zn(2+)</name>
        <dbReference type="ChEBI" id="CHEBI:29105"/>
        <label>1</label>
    </ligand>
</feature>
<feature type="binding site" evidence="20 33 35 46 47 48 49 50 51 52">
    <location>
        <position position="1529"/>
    </location>
    <ligand>
        <name>Zn(2+)</name>
        <dbReference type="ChEBI" id="CHEBI:29105"/>
        <label>2</label>
    </ligand>
</feature>
<feature type="binding site" evidence="20 33 35 46 47 48 49 50 51 52">
    <location>
        <position position="1533"/>
    </location>
    <ligand>
        <name>Zn(2+)</name>
        <dbReference type="ChEBI" id="CHEBI:29105"/>
        <label>2</label>
    </ligand>
</feature>
<feature type="binding site" evidence="20 33 35 46 47 48 49 50 51 52">
    <location>
        <position position="1539"/>
    </location>
    <ligand>
        <name>Zn(2+)</name>
        <dbReference type="ChEBI" id="CHEBI:29105"/>
        <label>2</label>
    </ligand>
</feature>
<feature type="binding site" evidence="20 33 35 47 48 49 50 52">
    <location>
        <begin position="1560"/>
        <end position="1562"/>
    </location>
    <ligand>
        <name>S-adenosyl-L-methionine</name>
        <dbReference type="ChEBI" id="CHEBI:59789"/>
    </ligand>
</feature>
<feature type="binding site" evidence="20 33 35 47 48 49 50 52">
    <location>
        <begin position="1603"/>
        <end position="1605"/>
    </location>
    <ligand>
        <name>S-adenosyl-L-methionine</name>
        <dbReference type="ChEBI" id="CHEBI:59789"/>
    </ligand>
</feature>
<feature type="binding site" evidence="20 33 35 47 48 49 50 52">
    <location>
        <begin position="1628"/>
        <end position="1629"/>
    </location>
    <ligand>
        <name>S-adenosyl-L-methionine</name>
        <dbReference type="ChEBI" id="CHEBI:59789"/>
    </ligand>
</feature>
<feature type="binding site" evidence="20 33 35 46 47 48 49 50 51 52">
    <location>
        <position position="1631"/>
    </location>
    <ligand>
        <name>Zn(2+)</name>
        <dbReference type="ChEBI" id="CHEBI:29105"/>
        <label>3</label>
    </ligand>
</feature>
<feature type="binding site" evidence="20 33 35 47 48 49 50 52">
    <location>
        <position position="1676"/>
    </location>
    <ligand>
        <name>S-adenosyl-L-methionine</name>
        <dbReference type="ChEBI" id="CHEBI:59789"/>
    </ligand>
</feature>
<feature type="binding site" evidence="20 33 35 46 47 48 49 50 51 52">
    <location>
        <position position="1678"/>
    </location>
    <ligand>
        <name>Zn(2+)</name>
        <dbReference type="ChEBI" id="CHEBI:29105"/>
        <label>3</label>
    </ligand>
</feature>
<feature type="binding site" evidence="20 33 35 47 48 49 50 52">
    <location>
        <position position="1679"/>
    </location>
    <ligand>
        <name>S-adenosyl-L-methionine</name>
        <dbReference type="ChEBI" id="CHEBI:59789"/>
    </ligand>
</feature>
<feature type="binding site" evidence="20 33 35 46 47 48 49 50 51 52">
    <location>
        <position position="1680"/>
    </location>
    <ligand>
        <name>Zn(2+)</name>
        <dbReference type="ChEBI" id="CHEBI:29105"/>
        <label>3</label>
    </ligand>
</feature>
<feature type="binding site" evidence="20 33 35 46 47 48 49 50 51 52">
    <location>
        <position position="1685"/>
    </location>
    <ligand>
        <name>Zn(2+)</name>
        <dbReference type="ChEBI" id="CHEBI:29105"/>
        <label>3</label>
    </ligand>
</feature>
<feature type="modified residue" description="Phosphoserine" evidence="55 58">
    <location>
        <position position="131"/>
    </location>
</feature>
<feature type="modified residue" description="Phosphoserine" evidence="54 55 56 57 59">
    <location>
        <position position="321"/>
    </location>
</feature>
<feature type="modified residue" description="Phosphoserine" evidence="54 55 56 57">
    <location>
        <position position="323"/>
    </location>
</feature>
<feature type="modified residue" description="Phosphoserine" evidence="58">
    <location>
        <position position="344"/>
    </location>
</feature>
<feature type="modified residue" description="Phosphoserine" evidence="58">
    <location>
        <position position="422"/>
    </location>
</feature>
<feature type="modified residue" description="Phosphoserine" evidence="58">
    <location>
        <position position="532"/>
    </location>
</feature>
<feature type="modified residue" description="Phosphoserine" evidence="58 59">
    <location>
        <position position="614"/>
    </location>
</feature>
<feature type="modified residue" description="Phosphoserine" evidence="54 56 57 58">
    <location>
        <position position="624"/>
    </location>
</feature>
<feature type="modified residue" description="Phosphothreonine" evidence="58">
    <location>
        <position position="626"/>
    </location>
</feature>
<feature type="modified residue" description="Phosphoserine" evidence="1">
    <location>
        <position position="698"/>
    </location>
</feature>
<feature type="modified residue" description="Phosphoserine" evidence="55">
    <location>
        <position position="708"/>
    </location>
</feature>
<feature type="modified residue" description="Phosphoserine" evidence="55 58">
    <location>
        <position position="744"/>
    </location>
</feature>
<feature type="modified residue" description="Phosphoserine" evidence="54 55 57 58">
    <location>
        <position position="754"/>
    </location>
</feature>
<feature type="modified residue" description="Phosphoserine" evidence="58">
    <location>
        <position position="1098"/>
    </location>
</feature>
<feature type="modified residue" description="Phosphoserine" evidence="53 54 58">
    <location>
        <position position="1228"/>
    </location>
</feature>
<feature type="modified residue" description="Phosphoserine" evidence="1">
    <location>
        <position position="1413"/>
    </location>
</feature>
<feature type="modified residue" description="Phosphoserine" evidence="1">
    <location>
        <position position="1415"/>
    </location>
</feature>
<feature type="modified residue" description="Phosphoserine" evidence="1">
    <location>
        <position position="1417"/>
    </location>
</feature>
<feature type="modified residue" description="Phosphoserine" evidence="58">
    <location>
        <position position="1696"/>
    </location>
</feature>
<feature type="modified residue" description="Phosphoserine" evidence="1">
    <location>
        <position position="1844"/>
    </location>
</feature>
<feature type="modified residue" description="Phosphoserine" evidence="1">
    <location>
        <position position="1845"/>
    </location>
</feature>
<feature type="modified residue" description="Phosphothreonine" evidence="58 59">
    <location>
        <position position="1853"/>
    </location>
</feature>
<feature type="modified residue" description="Phosphothreonine" evidence="54 56 58">
    <location>
        <position position="1872"/>
    </location>
</feature>
<feature type="modified residue" description="Phosphoserine" evidence="58">
    <location>
        <position position="1888"/>
    </location>
</feature>
<feature type="modified residue" description="Phosphoserine" evidence="58">
    <location>
        <position position="1952"/>
    </location>
</feature>
<feature type="modified residue" description="Phosphoserine" evidence="1">
    <location>
        <position position="1980"/>
    </location>
</feature>
<feature type="modified residue" description="Phosphoserine" evidence="1">
    <location>
        <position position="1988"/>
    </location>
</feature>
<feature type="modified residue" description="Phosphoserine" evidence="1">
    <location>
        <position position="1995"/>
    </location>
</feature>
<feature type="modified residue" description="Phosphoserine" evidence="54 58">
    <location>
        <position position="2080"/>
    </location>
</feature>
<feature type="modified residue" description="Phosphoserine" evidence="54 57 58">
    <location>
        <position position="2082"/>
    </location>
</feature>
<feature type="cross-link" description="Glycyl lysine isopeptide (Lys-Gly) (interchain with G-Cter in SUMO2)" evidence="61">
    <location>
        <position position="359"/>
    </location>
</feature>
<feature type="cross-link" description="Glycyl lysine isopeptide (Lys-Gly) (interchain with G-Cter in SUMO2)" evidence="60 61">
    <location>
        <position position="637"/>
    </location>
</feature>
<feature type="cross-link" description="Glycyl lysine isopeptide (Lys-Gly) (interchain with G-Cter in SUMO2)" evidence="61">
    <location>
        <position position="776"/>
    </location>
</feature>
<feature type="splice variant" id="VSP_020914" description="In isoform 3." evidence="42">
    <location>
        <begin position="1573"/>
        <end position="2564"/>
    </location>
</feature>
<feature type="splice variant" id="VSP_020915" description="In isoform 2." evidence="44">
    <location>
        <begin position="1715"/>
        <end position="2564"/>
    </location>
</feature>
<feature type="sequence variant" id="VAR_079054" description="In ALL; uncertain significance; somatic mutation." evidence="26">
    <original>K</original>
    <variation>R</variation>
    <location>
        <position position="2"/>
    </location>
</feature>
<feature type="sequence variant" id="VAR_079055" description="In ALL; uncertain significance; somatic mutation." evidence="26">
    <original>E</original>
    <variation>G</variation>
    <location>
        <position position="19"/>
    </location>
</feature>
<feature type="sequence variant" id="VAR_079056" description="In AML; uncertain significance; somatic mutation." evidence="25">
    <location>
        <begin position="70"/>
        <end position="2564"/>
    </location>
</feature>
<feature type="sequence variant" id="VAR_079057" description="In ALL; uncertain significance; somatic mutation; dbSNP:rs780963440." evidence="25">
    <original>P</original>
    <variation>S</variation>
    <location>
        <position position="226"/>
    </location>
</feature>
<feature type="sequence variant" id="VAR_079058" description="In ALL; uncertain significance; somatic mutation; dbSNP:rs186148199." evidence="26">
    <original>V</original>
    <variation>I</variation>
    <location>
        <position position="267"/>
    </location>
</feature>
<feature type="sequence variant" id="VAR_079059" description="In ALL; uncertain significance; somatic mutation; dbSNP:rs2106698582." evidence="26">
    <original>S</original>
    <variation>P</variation>
    <location>
        <position position="470"/>
    </location>
</feature>
<feature type="sequence variant" id="VAR_078707" description="Found in a patient with autism; uncertain significance; dbSNP:rs757781388." evidence="31">
    <original>Y</original>
    <variation>C</variation>
    <location>
        <position position="488"/>
    </location>
</feature>
<feature type="sequence variant" id="VAR_079060" description="In ALL; uncertain significance; somatic mutation; dbSNP:rs2106696296." evidence="26">
    <original>T</original>
    <variation>A</variation>
    <location>
        <position position="499"/>
    </location>
</feature>
<feature type="sequence variant" id="VAR_079061" description="In ALL; uncertain significance; somatic mutation; dbSNP:rs188887061." evidence="25">
    <original>M</original>
    <variation>I</variation>
    <location>
        <position position="761"/>
    </location>
</feature>
<feature type="sequence variant" id="VAR_027839" description="In dbSNP:rs9311404.">
    <original>V</original>
    <variation>L</variation>
    <location>
        <position position="768"/>
    </location>
</feature>
<feature type="sequence variant" id="VAR_079062" description="In ALL; uncertain significance; somatic mutation." evidence="26">
    <location>
        <begin position="794"/>
        <end position="2564"/>
    </location>
</feature>
<feature type="sequence variant" id="VAR_079063" description="In AML; uncertain significance; somatic mutation; dbSNP:rs1169288572." evidence="25">
    <original>S</original>
    <variation>N</variation>
    <location>
        <position position="800"/>
    </location>
</feature>
<feature type="sequence variant" id="VAR_061216" description="In dbSNP:rs58906143.">
    <original>E</original>
    <variation>Q</variation>
    <location>
        <position position="902"/>
    </location>
</feature>
<feature type="sequence variant" id="VAR_079064" description="In ALL; uncertain significance; somatic mutation; dbSNP:rs2106649185." evidence="26">
    <original>S</original>
    <variation>P</variation>
    <location>
        <position position="1076"/>
    </location>
</feature>
<feature type="sequence variant" id="VAR_079065" description="In ALL; uncertain significance; somatic mutation; dbSNP:rs2106647405." evidence="26">
    <original>S</original>
    <variation>G</variation>
    <location>
        <position position="1093"/>
    </location>
</feature>
<feature type="sequence variant" id="VAR_079066" description="In ALL; uncertain significance; somatic mutation; dbSNP:rs540476365." evidence="26">
    <original>T</original>
    <variation>A</variation>
    <location>
        <position position="1171"/>
    </location>
</feature>
<feature type="sequence variant" id="VAR_079067" description="In ALL; uncertain significance; somatic mutation; dbSNP:rs2107743274." evidence="26">
    <original>D</original>
    <variation>G</variation>
    <location>
        <position position="1351"/>
    </location>
</feature>
<feature type="sequence variant" id="VAR_079068" description="In ALL; uncertain significance; somatic mutation." evidence="26">
    <original>G</original>
    <variation>E</variation>
    <location>
        <position position="1365"/>
    </location>
</feature>
<feature type="sequence variant" id="VAR_079069" description="In AML; uncertain significance; somatic mutation; dbSNP:rs754921650." evidence="25">
    <original>D</original>
    <variation>G</variation>
    <location>
        <position position="1397"/>
    </location>
</feature>
<feature type="sequence variant" id="VAR_079070" description="In ALL; uncertain significance; somatic mutation." evidence="26">
    <location>
        <begin position="1416"/>
        <end position="2564"/>
    </location>
</feature>
<feature type="sequence variant" id="VAR_079071" description="In ALL; uncertain significance; somatic mutation; dbSNP:rs2107739829." evidence="26">
    <original>D</original>
    <variation>N</variation>
    <location>
        <position position="1453"/>
    </location>
</feature>
<feature type="sequence variant" id="VAR_079072" description="In ALL; uncertain significance; somatic mutation; dbSNP:rs2107728929." evidence="25">
    <original>D</original>
    <variation>N</variation>
    <location>
        <position position="1493"/>
    </location>
</feature>
<feature type="sequence variant" id="VAR_079073" description="In ALL; uncertain significance; somatic mutation." evidence="25">
    <location>
        <begin position="1496"/>
        <end position="2564"/>
    </location>
</feature>
<feature type="sequence variant" id="VAR_079074" description="In ALL; uncertain significance; somatic mutation; dbSNP:rs2107696009." evidence="26">
    <original>L</original>
    <variation>P</variation>
    <location>
        <position position="1609"/>
    </location>
</feature>
<feature type="sequence variant" id="VAR_079075" description="In ALL; uncertain significance; somatic mutation." evidence="25">
    <original>K</original>
    <variation>Q</variation>
    <location>
        <position position="1654"/>
    </location>
</feature>
<feature type="sequence variant" id="VAR_079076" description="In ALL; uncertain significance; somatic mutation; dbSNP:rs1478147351." evidence="26">
    <original>T</original>
    <variation>M</variation>
    <location>
        <position position="1663"/>
    </location>
</feature>
<feature type="sequence variant" id="VAR_069812" description="In RCC; defects in recruitment of the MutS alpha complex." evidence="23">
    <original>N</original>
    <variation>D</variation>
    <location>
        <position position="1733"/>
    </location>
</feature>
<feature type="sequence variant" id="VAR_087881" description="In MRD70; dbSNP:rs2107651195." evidence="37">
    <original>R</original>
    <variation>Q</variation>
    <location>
        <position position="1740"/>
    </location>
</feature>
<feature type="sequence variant" id="VAR_087882" description="In RAPAS; dbSNP:rs1057523157." evidence="37">
    <original>R</original>
    <variation>W</variation>
    <location>
        <position position="1740"/>
    </location>
</feature>
<feature type="sequence variant" id="VAR_069813" description="In RCC; defects in recruitment of the MutS alpha complex; dbSNP:rs2107646161." evidence="23">
    <original>S</original>
    <variation>P</variation>
    <location>
        <position position="1769"/>
    </location>
</feature>
<feature type="sequence variant" id="VAR_079077" description="In AML; uncertain significance; somatic mutation." evidence="25">
    <original>L</original>
    <variation>S</variation>
    <location>
        <position position="1804"/>
    </location>
</feature>
<feature type="sequence variant" id="VAR_076536" description="In LLS; uncertain significance; dbSNP:rs869025570." evidence="28">
    <original>L</original>
    <variation>W</variation>
    <location>
        <position position="1815"/>
    </location>
</feature>
<feature type="sequence variant" id="VAR_079078" description="In ALL; uncertain significance; somatic mutation." evidence="26">
    <original>L</original>
    <variation>P</variation>
    <location>
        <position position="1821"/>
    </location>
</feature>
<feature type="sequence variant" id="VAR_027840" description="In dbSNP:rs11721074.">
    <original>A</original>
    <variation>D</variation>
    <location>
        <position position="1868"/>
    </location>
</feature>
<feature type="sequence variant" id="VAR_079079" description="In ALL; uncertain significance; somatic mutation." evidence="26">
    <original>V</original>
    <variation>A</variation>
    <location>
        <position position="1915"/>
    </location>
</feature>
<feature type="sequence variant" id="VAR_079080" description="In ALL; uncertain significance; somatic mutation." evidence="26">
    <original>E</original>
    <variation>V</variation>
    <location>
        <position position="1920"/>
    </location>
</feature>
<feature type="sequence variant" id="VAR_027841" description="In dbSNP:rs4082155." evidence="9 11">
    <original>P</original>
    <variation>L</variation>
    <location>
        <position position="1962"/>
    </location>
</feature>
<feature type="sequence variant" id="VAR_079081" description="In ALL; uncertain significance; somatic mutation." evidence="25">
    <location>
        <begin position="2077"/>
        <end position="2564"/>
    </location>
</feature>
<feature type="sequence variant" id="VAR_079082" description="In AML; uncertain significance; somatic mutation." evidence="25">
    <original>R</original>
    <variation>W</variation>
    <location>
        <position position="2122"/>
    </location>
</feature>
<feature type="sequence variant" id="VAR_079083" description="In ALL; uncertain significance; somatic mutation." evidence="25">
    <original>T</original>
    <variation>A</variation>
    <location>
        <position position="2214"/>
    </location>
</feature>
<feature type="sequence variant" id="VAR_079084" description="In AML; uncertain significance; somatic mutation." evidence="25">
    <location>
        <begin position="2325"/>
        <end position="2564"/>
    </location>
</feature>
<feature type="sequence variant" id="VAR_079085" description="In ALL; uncertain significance; somatic mutation; dbSNP:rs2107549069." evidence="26">
    <original>P</original>
    <variation>S</variation>
    <location>
        <position position="2361"/>
    </location>
</feature>
<feature type="sequence variant" id="VAR_079086" description="In AML; uncertain significance; somatic mutation; impairs interaction with hyperphosphorylated POLR2A; dbSNP:rs1244994348." evidence="13 25">
    <original>F</original>
    <variation>L</variation>
    <location>
        <position position="2505"/>
    </location>
</feature>
<feature type="sequence variant" id="VAR_079087" description="In ALL; uncertain significance; somatic mutation." evidence="25">
    <location>
        <begin position="2524"/>
        <end position="2564"/>
    </location>
</feature>
<feature type="sequence variant" id="VAR_079088" description="In ALL; uncertain significance; somatic mutation." evidence="26">
    <location>
        <begin position="2546"/>
        <end position="2564"/>
    </location>
</feature>
<feature type="mutagenesis site" description="Strongly reduced methyltransferase activity." evidence="33">
    <original>F</original>
    <variation>A</variation>
    <location>
        <position position="1589"/>
    </location>
</feature>
<feature type="mutagenesis site" description="Increased methyltransferase activity." evidence="33">
    <original>Y</original>
    <variation>A</variation>
    <location>
        <position position="1604"/>
    </location>
</feature>
<feature type="mutagenesis site" description="Loss of methyltransferase activity. Abolishes ability to monomethylate STAT1." evidence="12 36">
    <original>R</original>
    <variation>H</variation>
    <variation>G</variation>
    <location>
        <position position="1625"/>
    </location>
</feature>
<feature type="mutagenesis site" description="Does not affect methyltransferase activity." evidence="36">
    <original>C</original>
    <variation>A</variation>
    <location>
        <position position="1631"/>
    </location>
</feature>
<feature type="mutagenesis site" description="Increased methyltransferase activity." evidence="33">
    <original>E</original>
    <variation>A</variation>
    <location>
        <position position="1636"/>
    </location>
</feature>
<feature type="mutagenesis site" description="Increased methyltransferase activity." evidence="33">
    <original>T</original>
    <variation>A</variation>
    <location>
        <position position="1637"/>
    </location>
</feature>
<feature type="mutagenesis site" description="Strongly reduced methyltransferase activity." evidence="20 33">
    <original>F</original>
    <variation>A</variation>
    <location>
        <position position="1668"/>
    </location>
</feature>
<feature type="mutagenesis site" description="Loss of methyltransferase activity." evidence="20">
    <original>Q</original>
    <variation>A</variation>
    <location>
        <position position="1669"/>
    </location>
</feature>
<feature type="mutagenesis site" description="Impaired methyltransferase activity." evidence="20">
    <original>R</original>
    <variation>A</variation>
    <variation>V</variation>
    <variation>L</variation>
    <variation>I</variation>
    <variation>F</variation>
    <location>
        <position position="1670"/>
    </location>
</feature>
<feature type="mutagenesis site" description="Loss of methyltransferase activity." evidence="20">
    <original>R</original>
    <variation>P</variation>
    <variation>W</variation>
    <variation>K</variation>
    <variation>Q</variation>
    <location>
        <position position="1670"/>
    </location>
</feature>
<feature type="mutagenesis site" description="Strongly reduced methyltransferase activity." evidence="20 33">
    <original>Y</original>
    <variation>A</variation>
    <location>
        <position position="1671"/>
    </location>
</feature>
<feature type="mutagenesis site" description="Does not affect interaction with hyperphosphorylated POLR2A." evidence="13">
    <original>R</original>
    <variation>A</variation>
    <location>
        <position position="2475"/>
    </location>
</feature>
<feature type="mutagenesis site" description="Does not affect interaction with hyperphosphorylated POLR2A." evidence="13">
    <original>K</original>
    <variation>A</variation>
    <location>
        <position position="2476"/>
    </location>
</feature>
<feature type="mutagenesis site" description="Does not affect interaction with hyperphosphorylated POLR2A." evidence="13">
    <original>Q</original>
    <variation>A</variation>
    <location>
        <position position="2480"/>
    </location>
</feature>
<feature type="mutagenesis site" description="Does not affect interaction with hyperphosphorylated POLR2A." evidence="13">
    <original>F</original>
    <variation>A</variation>
    <location>
        <position position="2481"/>
    </location>
</feature>
<feature type="mutagenesis site" description="Impairs interaction with hyperphosphorylated POLR2A." evidence="13">
    <original>V</original>
    <variation>A</variation>
    <location>
        <position position="2483"/>
    </location>
</feature>
<feature type="mutagenesis site" description="Impairs interaction with hyperphosphorylated POLR2A." evidence="13">
    <original>K</original>
    <variation>A</variation>
    <location>
        <position position="2506"/>
    </location>
</feature>
<feature type="mutagenesis site" description="Impairs interaction with hyperphosphorylated POLR2A." evidence="13">
    <original>R</original>
    <variation>A</variation>
    <location>
        <position position="2510"/>
    </location>
</feature>
<feature type="mutagenesis site" description="Impairs interaction with hyperphosphorylated POLR2A." evidence="13">
    <original>H</original>
    <variation>A</variation>
    <location>
        <position position="2514"/>
    </location>
</feature>
<feature type="mutagenesis site" description="Does not affect interaction with hyperphosphorylated POLR2A." evidence="13">
    <original>G</original>
    <variation>A</variation>
    <variation>T</variation>
    <location>
        <position position="2515"/>
    </location>
</feature>
<feature type="mutagenesis site" description="Increases interaction with hyperphosphorylated POLR2A; when associated with A-2531." evidence="13">
    <original>E</original>
    <variation>A</variation>
    <location>
        <position position="2528"/>
    </location>
</feature>
<feature type="mutagenesis site" description="Increases interaction with hyperphosphorylated POLR2A; when associated with A-2528." evidence="13">
    <original>E</original>
    <variation>A</variation>
    <location>
        <position position="2531"/>
    </location>
</feature>
<feature type="sequence conflict" description="In Ref. 2; BAD18522." evidence="45" ref="2">
    <original>R</original>
    <variation>Q</variation>
    <location>
        <position position="448"/>
    </location>
</feature>
<feature type="sequence conflict" description="In Ref. 3; CAD38601." evidence="45" ref="3">
    <original>A</original>
    <variation>V</variation>
    <location>
        <position position="455"/>
    </location>
</feature>
<feature type="sequence conflict" description="In Ref. 2; BAB15367." evidence="45" ref="2">
    <original>L</original>
    <variation>P</variation>
    <location>
        <position position="912"/>
    </location>
</feature>
<feature type="sequence conflict" description="In Ref. 4; CAC28349, 6; AAT77612 and 7; AAT77613." evidence="45" ref="4 6 7">
    <original>E</original>
    <variation>K</variation>
    <location>
        <position position="964"/>
    </location>
</feature>
<feature type="sequence conflict" description="In Ref. 2; BAC87131." evidence="45" ref="2">
    <original>M</original>
    <variation>I</variation>
    <location>
        <position position="1080"/>
    </location>
</feature>
<feature type="sequence conflict" description="In Ref. 3; CAD38601." evidence="45" ref="3">
    <original>M</original>
    <variation>T</variation>
    <location>
        <position position="1080"/>
    </location>
</feature>
<feature type="sequence conflict" description="In Ref. 2; BAD18522." evidence="45" ref="2">
    <original>V</original>
    <variation>F</variation>
    <location>
        <position position="1212"/>
    </location>
</feature>
<feature type="sequence conflict" description="In Ref. 4; CAC28349, 6; AAT77612 and 7; AAT77613." evidence="45" ref="4 6 7">
    <original>T</original>
    <variation>A</variation>
    <location>
        <position position="1269"/>
    </location>
</feature>
<feature type="sequence conflict" description="In Ref. 2; BAB15367." evidence="45" ref="2">
    <original>E</original>
    <variation>G</variation>
    <location>
        <position position="1338"/>
    </location>
</feature>
<feature type="sequence conflict" description="In Ref. 3; CAD38601." evidence="45" ref="3">
    <original>Q</original>
    <variation>R</variation>
    <location>
        <position position="1498"/>
    </location>
</feature>
<feature type="sequence conflict" description="In Ref. 10; AAF29041." evidence="45" ref="10">
    <original>K</original>
    <variation>N</variation>
    <location>
        <position position="1706"/>
    </location>
</feature>
<feature type="sequence conflict" description="In Ref. 4; CAC28349 and 6; AAT77612." evidence="45" ref="4 6">
    <original>L</original>
    <variation>P</variation>
    <location>
        <position position="1736"/>
    </location>
</feature>
<feature type="strand" evidence="66">
    <location>
        <begin position="1448"/>
        <end position="1450"/>
    </location>
</feature>
<feature type="helix" evidence="66">
    <location>
        <begin position="1451"/>
        <end position="1455"/>
    </location>
</feature>
<feature type="helix" evidence="66">
    <location>
        <begin position="1457"/>
        <end position="1465"/>
    </location>
</feature>
<feature type="strand" evidence="70">
    <location>
        <begin position="1472"/>
        <end position="1474"/>
    </location>
</feature>
<feature type="strand" evidence="66">
    <location>
        <begin position="1480"/>
        <end position="1483"/>
    </location>
</feature>
<feature type="turn" evidence="70">
    <location>
        <begin position="1490"/>
        <end position="1493"/>
    </location>
</feature>
<feature type="helix" evidence="66">
    <location>
        <begin position="1506"/>
        <end position="1511"/>
    </location>
</feature>
<feature type="helix" evidence="66">
    <location>
        <begin position="1521"/>
        <end position="1524"/>
    </location>
</feature>
<feature type="strand" evidence="68">
    <location>
        <begin position="1531"/>
        <end position="1533"/>
    </location>
</feature>
<feature type="helix" evidence="66">
    <location>
        <begin position="1536"/>
        <end position="1538"/>
    </location>
</feature>
<feature type="strand" evidence="67">
    <location>
        <begin position="1539"/>
        <end position="1541"/>
    </location>
</feature>
<feature type="turn" evidence="66">
    <location>
        <begin position="1543"/>
        <end position="1547"/>
    </location>
</feature>
<feature type="strand" evidence="66">
    <location>
        <begin position="1552"/>
        <end position="1556"/>
    </location>
</feature>
<feature type="strand" evidence="66">
    <location>
        <begin position="1558"/>
        <end position="1560"/>
    </location>
</feature>
<feature type="strand" evidence="66">
    <location>
        <begin position="1562"/>
        <end position="1568"/>
    </location>
</feature>
<feature type="strand" evidence="66">
    <location>
        <begin position="1575"/>
        <end position="1578"/>
    </location>
</feature>
<feature type="strand" evidence="66">
    <location>
        <begin position="1582"/>
        <end position="1584"/>
    </location>
</feature>
<feature type="helix" evidence="66">
    <location>
        <begin position="1586"/>
        <end position="1598"/>
    </location>
</feature>
<feature type="strand" evidence="66">
    <location>
        <begin position="1606"/>
        <end position="1610"/>
    </location>
</feature>
<feature type="strand" evidence="66">
    <location>
        <begin position="1613"/>
        <end position="1616"/>
    </location>
</feature>
<feature type="strand" evidence="66">
    <location>
        <begin position="1618"/>
        <end position="1621"/>
    </location>
</feature>
<feature type="helix" evidence="66">
    <location>
        <begin position="1623"/>
        <end position="1626"/>
    </location>
</feature>
<feature type="strand" evidence="66">
    <location>
        <begin position="1634"/>
        <end position="1642"/>
    </location>
</feature>
<feature type="strand" evidence="66">
    <location>
        <begin position="1645"/>
        <end position="1654"/>
    </location>
</feature>
<feature type="strand" evidence="66">
    <location>
        <begin position="1661"/>
        <end position="1664"/>
    </location>
</feature>
<feature type="helix" evidence="69">
    <location>
        <begin position="1667"/>
        <end position="1670"/>
    </location>
</feature>
<feature type="strand" evidence="66">
    <location>
        <begin position="1672"/>
        <end position="1674"/>
    </location>
</feature>
<feature type="strand" evidence="69">
    <location>
        <begin position="1675"/>
        <end position="1677"/>
    </location>
</feature>
<feature type="strand" evidence="70">
    <location>
        <begin position="1682"/>
        <end position="1684"/>
    </location>
</feature>
<feature type="strand" evidence="69">
    <location>
        <begin position="1687"/>
        <end position="1691"/>
    </location>
</feature>
<feature type="helix" evidence="66">
    <location>
        <begin position="1697"/>
        <end position="1700"/>
    </location>
</feature>
<feature type="strand" evidence="71">
    <location>
        <begin position="2172"/>
        <end position="2175"/>
    </location>
</feature>
<feature type="turn" evidence="72">
    <location>
        <begin position="2182"/>
        <end position="2185"/>
    </location>
</feature>
<feature type="strand" evidence="65">
    <location>
        <begin position="2377"/>
        <end position="2379"/>
    </location>
</feature>
<feature type="helix" evidence="64">
    <location>
        <begin position="2386"/>
        <end position="2388"/>
    </location>
</feature>
<feature type="strand" evidence="63">
    <location>
        <begin position="2392"/>
        <end position="2399"/>
    </location>
</feature>
<feature type="turn" evidence="65">
    <location>
        <begin position="2401"/>
        <end position="2403"/>
    </location>
</feature>
<feature type="strand" evidence="63">
    <location>
        <begin position="2405"/>
        <end position="2409"/>
    </location>
</feature>
<feature type="turn" evidence="63">
    <location>
        <begin position="2410"/>
        <end position="2413"/>
    </location>
</feature>
<feature type="strand" evidence="64">
    <location>
        <begin position="2414"/>
        <end position="2419"/>
    </location>
</feature>
<feature type="strand" evidence="63">
    <location>
        <begin position="2424"/>
        <end position="2428"/>
    </location>
</feature>
<feature type="helix" evidence="62">
    <location>
        <begin position="2463"/>
        <end position="2486"/>
    </location>
</feature>
<feature type="turn" evidence="62">
    <location>
        <begin position="2487"/>
        <end position="2489"/>
    </location>
</feature>
<feature type="strand" evidence="62">
    <location>
        <begin position="2495"/>
        <end position="2498"/>
    </location>
</feature>
<feature type="helix" evidence="62">
    <location>
        <begin position="2502"/>
        <end position="2524"/>
    </location>
</feature>
<feature type="helix" evidence="62">
    <location>
        <begin position="2527"/>
        <end position="2529"/>
    </location>
</feature>
<feature type="helix" evidence="62">
    <location>
        <begin position="2534"/>
        <end position="2548"/>
    </location>
</feature>
<feature type="turn" evidence="62">
    <location>
        <begin position="2549"/>
        <end position="2551"/>
    </location>
</feature>
<feature type="helix" evidence="62">
    <location>
        <begin position="2557"/>
        <end position="2559"/>
    </location>
</feature>
<comment type="function">
    <text evidence="1 12 15 18 19 20 22 23 25 27 32 33 34 36">Histone methyltransferase that specifically trimethylates 'Lys-36' of histone H3 (H3K36me3) using dimethylated 'Lys-36' (H3K36me2) as substrate (PubMed:16118227, PubMed:19141475, PubMed:21526191, PubMed:21792193, PubMed:23043551, PubMed:27474439). It is capable of trimethylating unmethylated H3K36 (H3K36me0) in vitro (PubMed:19332550). Represents the main enzyme generating H3K36me3, a specific tag for epigenetic transcriptional activation (By similarity). Plays a role in chromatin structure modulation during elongation by coordinating recruitment of the FACT complex and by interacting with hyperphosphorylated POLR2A (PubMed:23325844). Acts as a key regulator of DNA mismatch repair in G1 and early S phase by generating H3K36me3, a mark required to recruit MSH6 subunit of the MutS alpha complex: early recruitment of the MutS alpha complex to chromatin to be replicated allows a quick identification of mismatch DNA to initiate the mismatch repair reaction (PubMed:23622243). Required for DNA double-strand break repair in response to DNA damage: acts by mediating formation of H3K36me3, promoting recruitment of RAD51 and DNA repair via homologous recombination (HR) (PubMed:24843002). Acts as a tumor suppressor (PubMed:24509477). H3K36me3 also plays an essential role in the maintenance of a heterochromatic state, by recruiting DNA methyltransferase DNMT3A (PubMed:27317772). H3K36me3 is also enhanced in intron-containing genes, suggesting that SETD2 recruitment is enhanced by splicing and that splicing is coupled to recruitment of elongating RNA polymerase (PubMed:21792193). Required during angiogenesis (By similarity). Required for endoderm development by promoting embryonic stem cell differentiation toward endoderm: acts by mediating formation of H3K36me3 in distal promoter regions of FGFR3, leading to regulate transcription initiation of FGFR3 (By similarity). In addition to histones, also mediates methylation of other proteins, such as tubulins and STAT1 (PubMed:27518565, PubMed:28753426). Trimethylates 'Lys-40' of alpha-tubulins such as TUBA1B (alpha-TubK40me3); alpha-TubK40me3 is required for normal mitosis and cytokinesis and may be a specific tag in cytoskeletal remodeling (PubMed:27518565). Involved in interferon-alpha-induced antiviral defense by mediating both monomethylation of STAT1 at 'Lys-525' and catalyzing H3K36me3 on promoters of some interferon-stimulated genes (ISGs) to activate gene transcription (PubMed:28753426).</text>
</comment>
<comment type="function">
    <text evidence="10">(Microbial infection) Recruited to the promoters of adenovirus 12 E1A gene in case of infection, possibly leading to regulate its expression.</text>
</comment>
<comment type="catalytic activity">
    <reaction evidence="16 20 33">
        <text>L-lysyl(36)-[histone H3] + 3 S-adenosyl-L-methionine = N(6),N(6),N(6)-trimethyl-L-lysyl(36)-[histone H3] + 3 S-adenosyl-L-homocysteine + 3 H(+)</text>
        <dbReference type="Rhea" id="RHEA:60324"/>
        <dbReference type="Rhea" id="RHEA-COMP:9785"/>
        <dbReference type="Rhea" id="RHEA-COMP:15536"/>
        <dbReference type="ChEBI" id="CHEBI:15378"/>
        <dbReference type="ChEBI" id="CHEBI:29969"/>
        <dbReference type="ChEBI" id="CHEBI:57856"/>
        <dbReference type="ChEBI" id="CHEBI:59789"/>
        <dbReference type="ChEBI" id="CHEBI:61961"/>
        <dbReference type="EC" id="2.1.1.359"/>
    </reaction>
</comment>
<comment type="catalytic activity">
    <reaction evidence="20 36">
        <text>L-lysyl-[protein] + S-adenosyl-L-methionine = N(6)-methyl-L-lysyl-[protein] + S-adenosyl-L-homocysteine + H(+)</text>
        <dbReference type="Rhea" id="RHEA:51736"/>
        <dbReference type="Rhea" id="RHEA-COMP:9752"/>
        <dbReference type="Rhea" id="RHEA-COMP:13053"/>
        <dbReference type="ChEBI" id="CHEBI:15378"/>
        <dbReference type="ChEBI" id="CHEBI:29969"/>
        <dbReference type="ChEBI" id="CHEBI:57856"/>
        <dbReference type="ChEBI" id="CHEBI:59789"/>
        <dbReference type="ChEBI" id="CHEBI:61929"/>
    </reaction>
</comment>
<comment type="catalytic activity">
    <reaction evidence="34">
        <text>L-lysyl-[protein] + 3 S-adenosyl-L-methionine = N(6),N(6),N(6)-trimethyl-L-lysyl-[protein] + 3 S-adenosyl-L-homocysteine + 3 H(+)</text>
        <dbReference type="Rhea" id="RHEA:54192"/>
        <dbReference type="Rhea" id="RHEA-COMP:9752"/>
        <dbReference type="Rhea" id="RHEA-COMP:13826"/>
        <dbReference type="ChEBI" id="CHEBI:15378"/>
        <dbReference type="ChEBI" id="CHEBI:29969"/>
        <dbReference type="ChEBI" id="CHEBI:57856"/>
        <dbReference type="ChEBI" id="CHEBI:59789"/>
        <dbReference type="ChEBI" id="CHEBI:61961"/>
    </reaction>
</comment>
<comment type="activity regulation">
    <text evidence="20">Specifically inhibited by sinefungin derivatives. N-propyl sinefungin (Pr-SNF) interacts preferentially with SETD2.</text>
</comment>
<comment type="biophysicochemical properties">
    <kinetics>
        <KM evidence="20">1.21 uM for S-adenosyl-L-methionine</KM>
        <KM evidence="20">0.42 uM for histone H3</KM>
        <text evidence="20">kcat is 0.14 min(-1).</text>
    </kinetics>
</comment>
<comment type="subunit">
    <text evidence="8 10 12 13 14 15 16 34 36 38">Specifically interacts with hyperphosphorylated C-terminal domain (CTD) of RNA polymerase II large subunit (POLR2A): binds to CTD heptad repeats doubly phosphorylated on 'Ser-2' and 'Ser-5' of each heptad (PubMed:16118227, PubMed:16314571). Interacts with HTT (PubMed:10958656, PubMed:11461154, PubMed:9700202). Interacts with IWS1 (PubMed:19141475). Interacts with p53/TP53; leading to regulate p53/TP53 target genes (PubMed:18585004). Component of a complex with HNRNPL (PubMed:19332550, PubMed:36537238). Interacts with TUBA1A; the interaction is independent on alpha-tubulin acetylation on 'Lys-40' (PubMed:27518565). Interacts with STAT1 (PubMed:28753426).</text>
</comment>
<comment type="interaction">
    <interactant intactId="EBI-945869">
        <id>Q9BYW2</id>
    </interactant>
    <interactant intactId="EBI-466029">
        <id>P42858</id>
        <label>HTT</label>
    </interactant>
    <organismsDiffer>false</organismsDiffer>
    <experiments>4</experiments>
</comment>
<comment type="interaction">
    <interactant intactId="EBI-945869">
        <id>Q9BYW2</id>
    </interactant>
    <interactant intactId="EBI-347161">
        <id>P84022</id>
        <label>SMAD3</label>
    </interactant>
    <organismsDiffer>false</organismsDiffer>
    <experiments>2</experiments>
</comment>
<comment type="subcellular location">
    <subcellularLocation>
        <location evidence="1">Nucleus</location>
    </subcellularLocation>
    <subcellularLocation>
        <location evidence="1">Chromosome</location>
    </subcellularLocation>
</comment>
<comment type="alternative products">
    <event type="alternative splicing"/>
    <isoform>
        <id>Q9BYW2-1</id>
        <name>1</name>
        <sequence type="displayed"/>
    </isoform>
    <isoform>
        <id>Q9BYW2-2</id>
        <name>2</name>
        <sequence type="described" ref="VSP_020915"/>
    </isoform>
    <isoform>
        <id>Q9BYW2-3</id>
        <name>3</name>
        <sequence type="described" ref="VSP_020914"/>
    </isoform>
</comment>
<comment type="tissue specificity">
    <text evidence="10">Ubiquitously expressed.</text>
</comment>
<comment type="domain">
    <text evidence="12">The low charge region mediates the transcriptional activation activity.</text>
</comment>
<comment type="domain">
    <text evidence="33 35">The catalytic SET domain binds histone H3 (PubMed:27474439, PubMed:28256625). It is also able to bind oncogenic histone H3 K36M/I found in a number of cancer types, in which histone H3 'Lys-36' is replaced by a Met or an Ile residue. When binding the oncogenic variant histone H3 K36M/I, the SET domain undergoes dramatic conformational change to accommodate the histone H3 peptide, leading to sequester and inhibit SETD2 activity and block global H3K36 methylation (PubMed:27474439, PubMed:28256625).</text>
</comment>
<comment type="PTM">
    <text evidence="12">May be automethylated.</text>
</comment>
<comment type="disease" evidence="17 23 24 29">
    <disease id="DI-02254">
        <name>Renal cell carcinoma</name>
        <acronym>RCC</acronym>
        <description>Renal cell carcinoma is a heterogeneous group of sporadic or hereditary carcinoma derived from cells of the proximal renal tubular epithelium. It is subclassified into clear cell renal carcinoma (non-papillary carcinoma), papillary renal cell carcinoma, chromophobe renal cell carcinoma, collecting duct carcinoma with medullary carcinoma of the kidney, and unclassified renal cell carcinoma. Clear cell renal cell carcinoma is the most common subtype.</description>
        <dbReference type="MIM" id="144700"/>
    </disease>
    <text evidence="24 29">The disease may be caused by variants affecting the gene represented in this entry. Defects of SETD2 are associated with loss of DNA methylation at non-promoter regions (PubMed:23792563). SETD2 defects lead to aberrant and reduced nucleosome compaction and chromatin association of key replication proteins, such as MCM7 and DNA polymerase delta, leading to hinder replication fork progression and prevent loading of RAD51 homologous recombination repair factor at DNA breaks (PubMed:25728682).</text>
</comment>
<comment type="disease" evidence="21 28 30 32">
    <disease id="DI-04661">
        <name>Luscan-Lumish syndrome</name>
        <acronym>LLS</acronym>
        <description>An autosomal dominant syndrome with a variable phenotype. Clinical features include macrocephaly, distinctive facial appearance, postnatal overgrowth, various degrees of learning difficulties, autism spectrum disorder, and intellectual disability.</description>
        <dbReference type="MIM" id="616831"/>
    </disease>
    <text>The disease may be caused by variants affecting the gene represented in this entry.</text>
</comment>
<comment type="disease" evidence="25 26">
    <disease id="DI-03076">
        <name>Leukemia, acute lymphoblastic</name>
        <acronym>ALL</acronym>
        <description>A subtype of acute leukemia, a cancer of the white blood cells. ALL is a malignant disease of bone marrow and the most common malignancy diagnosed in children. The malignant cells are lymphoid precursor cells (lymphoblasts) that are arrested in an early stage of development. The lymphoblasts replace the normal marrow elements, resulting in a marked decrease in the production of normal blood cells. Consequently, anemia, thrombocytopenia, and neutropenia occur to varying degrees. The lymphoblasts also proliferate in organs other than the marrow, particularly the liver, spleen, and lymphnodes.</description>
        <dbReference type="MIM" id="613065"/>
    </disease>
    <text>The disease may be caused by variants affecting distinct genetic loci, including the gene represented in this entry.</text>
</comment>
<comment type="disease" evidence="13 25">
    <disease id="DI-01171">
        <name>Leukemia, acute myelogenous</name>
        <acronym>AML</acronym>
        <description>A subtype of acute leukemia, a cancer of the white blood cells. AML is a malignant disease of bone marrow characterized by maturational arrest of hematopoietic precursors at an early stage of development. Clonal expansion of myeloid blasts occurs in bone marrow, blood, and other tissue. Myelogenous leukemias develop from changes in cells that normally produce neutrophils, basophils, eosinophils and monocytes.</description>
        <dbReference type="MIM" id="601626"/>
    </disease>
    <text>The disease may be caused by variants affecting distinct genetic loci, including the gene represented in this entry.</text>
</comment>
<comment type="disease" evidence="37">
    <disease id="DI-06565">
        <name>Intellectual developmental disorder, autosomal dominant 70</name>
        <acronym>MRD70</acronym>
        <description>An autosomal dominant disorder characterized by mild global developmental delay, moderately impaired intellectual disability with speech difficulties, and behavioral abnormalities.</description>
        <dbReference type="MIM" id="620157"/>
    </disease>
    <text>The disease is caused by variants affecting the gene represented in this entry.</text>
</comment>
<comment type="disease" evidence="37">
    <disease id="DI-06563">
        <name>Rabin-Pappas syndrome</name>
        <acronym>RAPAS</acronym>
        <description>An autosomal dominant neurodevelopmental disorder characterized by severely impaired global development, intellectual disability, microcephaly, facial dysmorphism, and variable congenital anomalies affecting the skeletal, genitourinary, cardiac, and other organ systems.</description>
        <dbReference type="MIM" id="620155"/>
    </disease>
    <text>The disease is caused by variants affecting the gene represented in this entry.</text>
</comment>
<comment type="similarity">
    <text evidence="4">Belongs to the class V-like SAM-binding methyltransferase superfamily. Histone-lysine methyltransferase family. SET2 subfamily.</text>
</comment>
<comment type="sequence caution" evidence="45">
    <conflict type="frameshift">
        <sequence resource="EMBL-CDS" id="AAF29041"/>
    </conflict>
</comment>
<comment type="sequence caution" evidence="45">
    <conflict type="erroneous termination">
        <sequence resource="EMBL-CDS" id="AAH72440"/>
    </conflict>
    <text>Truncated C-terminus.</text>
</comment>
<comment type="sequence caution" evidence="45">
    <conflict type="erroneous initiation">
        <sequence resource="EMBL-CDS" id="AAI17163"/>
    </conflict>
    <text>Truncated N-terminus.</text>
</comment>
<comment type="sequence caution" evidence="45">
    <conflict type="erroneous initiation">
        <sequence resource="EMBL-CDS" id="AAI17165"/>
    </conflict>
    <text>Truncated N-terminus.</text>
</comment>
<comment type="sequence caution" evidence="45">
    <conflict type="erroneous initiation">
        <sequence resource="EMBL-CDS" id="AAT77612"/>
    </conflict>
    <text>Truncated N-terminus.</text>
</comment>
<comment type="sequence caution" evidence="45">
    <conflict type="erroneous initiation">
        <sequence resource="EMBL-CDS" id="AAT77613"/>
    </conflict>
    <text>Truncated N-terminus.</text>
</comment>
<comment type="sequence caution" evidence="45">
    <conflict type="erroneous initiation">
        <sequence resource="EMBL-CDS" id="BAB15367"/>
    </conflict>
    <text>Truncated N-terminus.</text>
</comment>
<comment type="sequence caution" evidence="45">
    <conflict type="miscellaneous discrepancy">
        <sequence resource="EMBL-CDS" id="BAB15367"/>
    </conflict>
    <text>Contaminating sequence. Potential poly-A sequence.</text>
</comment>
<comment type="sequence caution" evidence="45">
    <conflict type="erroneous initiation">
        <sequence resource="EMBL-CDS" id="BAC87131"/>
    </conflict>
    <text>Truncated N-terminus.</text>
</comment>
<comment type="sequence caution" evidence="45">
    <conflict type="erroneous termination">
        <sequence resource="EMBL-CDS" id="CAC28349"/>
    </conflict>
    <text>Truncated C-terminus.</text>
</comment>
<comment type="sequence caution" evidence="45">
    <conflict type="erroneous initiation">
        <sequence resource="EMBL-CDS" id="CAD38601"/>
    </conflict>
    <text>Truncated N-terminus.</text>
</comment>
<keyword id="KW-0002">3D-structure</keyword>
<keyword id="KW-0010">Activator</keyword>
<keyword id="KW-0025">Alternative splicing</keyword>
<keyword id="KW-0051">Antiviral defense</keyword>
<keyword id="KW-1268">Autism spectrum disorder</keyword>
<keyword id="KW-0156">Chromatin regulator</keyword>
<keyword id="KW-0158">Chromosome</keyword>
<keyword id="KW-0175">Coiled coil</keyword>
<keyword id="KW-0217">Developmental protein</keyword>
<keyword id="KW-0221">Differentiation</keyword>
<keyword id="KW-0225">Disease variant</keyword>
<keyword id="KW-0227">DNA damage</keyword>
<keyword id="KW-0234">DNA repair</keyword>
<keyword id="KW-0945">Host-virus interaction</keyword>
<keyword id="KW-0391">Immunity</keyword>
<keyword id="KW-0399">Innate immunity</keyword>
<keyword id="KW-0991">Intellectual disability</keyword>
<keyword id="KW-1017">Isopeptide bond</keyword>
<keyword id="KW-0479">Metal-binding</keyword>
<keyword id="KW-0489">Methyltransferase</keyword>
<keyword id="KW-0539">Nucleus</keyword>
<keyword id="KW-0597">Phosphoprotein</keyword>
<keyword id="KW-1267">Proteomics identification</keyword>
<keyword id="KW-1185">Reference proteome</keyword>
<keyword id="KW-0949">S-adenosyl-L-methionine</keyword>
<keyword id="KW-0804">Transcription</keyword>
<keyword id="KW-0805">Transcription regulation</keyword>
<keyword id="KW-0808">Transferase</keyword>
<keyword id="KW-0043">Tumor suppressor</keyword>
<keyword id="KW-0832">Ubl conjugation</keyword>
<keyword id="KW-0862">Zinc</keyword>
<evidence type="ECO:0000250" key="1">
    <source>
        <dbReference type="UniProtKB" id="E9Q5F9"/>
    </source>
</evidence>
<evidence type="ECO:0000255" key="2"/>
<evidence type="ECO:0000255" key="3">
    <source>
        <dbReference type="PROSITE-ProRule" id="PRU00155"/>
    </source>
</evidence>
<evidence type="ECO:0000255" key="4">
    <source>
        <dbReference type="PROSITE-ProRule" id="PRU00190"/>
    </source>
</evidence>
<evidence type="ECO:0000255" key="5">
    <source>
        <dbReference type="PROSITE-ProRule" id="PRU00224"/>
    </source>
</evidence>
<evidence type="ECO:0000255" key="6">
    <source>
        <dbReference type="PROSITE-ProRule" id="PRU00562"/>
    </source>
</evidence>
<evidence type="ECO:0000256" key="7">
    <source>
        <dbReference type="SAM" id="MobiDB-lite"/>
    </source>
</evidence>
<evidence type="ECO:0000269" key="8">
    <source>
    </source>
</evidence>
<evidence type="ECO:0000269" key="9">
    <source>
    </source>
</evidence>
<evidence type="ECO:0000269" key="10">
    <source>
    </source>
</evidence>
<evidence type="ECO:0000269" key="11">
    <source>
    </source>
</evidence>
<evidence type="ECO:0000269" key="12">
    <source>
    </source>
</evidence>
<evidence type="ECO:0000269" key="13">
    <source>
    </source>
</evidence>
<evidence type="ECO:0000269" key="14">
    <source>
    </source>
</evidence>
<evidence type="ECO:0000269" key="15">
    <source>
    </source>
</evidence>
<evidence type="ECO:0000269" key="16">
    <source>
    </source>
</evidence>
<evidence type="ECO:0000269" key="17">
    <source>
    </source>
</evidence>
<evidence type="ECO:0000269" key="18">
    <source>
    </source>
</evidence>
<evidence type="ECO:0000269" key="19">
    <source>
    </source>
</evidence>
<evidence type="ECO:0000269" key="20">
    <source>
    </source>
</evidence>
<evidence type="ECO:0000269" key="21">
    <source>
    </source>
</evidence>
<evidence type="ECO:0000269" key="22">
    <source>
    </source>
</evidence>
<evidence type="ECO:0000269" key="23">
    <source>
    </source>
</evidence>
<evidence type="ECO:0000269" key="24">
    <source>
    </source>
</evidence>
<evidence type="ECO:0000269" key="25">
    <source>
    </source>
</evidence>
<evidence type="ECO:0000269" key="26">
    <source>
    </source>
</evidence>
<evidence type="ECO:0000269" key="27">
    <source>
    </source>
</evidence>
<evidence type="ECO:0000269" key="28">
    <source>
    </source>
</evidence>
<evidence type="ECO:0000269" key="29">
    <source>
    </source>
</evidence>
<evidence type="ECO:0000269" key="30">
    <source>
    </source>
</evidence>
<evidence type="ECO:0000269" key="31">
    <source>
    </source>
</evidence>
<evidence type="ECO:0000269" key="32">
    <source>
    </source>
</evidence>
<evidence type="ECO:0000269" key="33">
    <source>
    </source>
</evidence>
<evidence type="ECO:0000269" key="34">
    <source>
    </source>
</evidence>
<evidence type="ECO:0000269" key="35">
    <source>
    </source>
</evidence>
<evidence type="ECO:0000269" key="36">
    <source>
    </source>
</evidence>
<evidence type="ECO:0000269" key="37">
    <source>
    </source>
</evidence>
<evidence type="ECO:0000269" key="38">
    <source>
    </source>
</evidence>
<evidence type="ECO:0000303" key="39">
    <source>
    </source>
</evidence>
<evidence type="ECO:0000303" key="40">
    <source>
    </source>
</evidence>
<evidence type="ECO:0000303" key="41">
    <source>
    </source>
</evidence>
<evidence type="ECO:0000303" key="42">
    <source>
    </source>
</evidence>
<evidence type="ECO:0000303" key="43">
    <source>
    </source>
</evidence>
<evidence type="ECO:0000303" key="44">
    <source ref="7"/>
</evidence>
<evidence type="ECO:0000305" key="45"/>
<evidence type="ECO:0007744" key="46">
    <source>
        <dbReference type="PDB" id="4FMU"/>
    </source>
</evidence>
<evidence type="ECO:0007744" key="47">
    <source>
        <dbReference type="PDB" id="4H12"/>
    </source>
</evidence>
<evidence type="ECO:0007744" key="48">
    <source>
        <dbReference type="PDB" id="5JJY"/>
    </source>
</evidence>
<evidence type="ECO:0007744" key="49">
    <source>
        <dbReference type="PDB" id="5JLB"/>
    </source>
</evidence>
<evidence type="ECO:0007744" key="50">
    <source>
        <dbReference type="PDB" id="5JLE"/>
    </source>
</evidence>
<evidence type="ECO:0007744" key="51">
    <source>
        <dbReference type="PDB" id="5V21"/>
    </source>
</evidence>
<evidence type="ECO:0007744" key="52">
    <source>
        <dbReference type="PDB" id="5V22"/>
    </source>
</evidence>
<evidence type="ECO:0007744" key="53">
    <source>
    </source>
</evidence>
<evidence type="ECO:0007744" key="54">
    <source>
    </source>
</evidence>
<evidence type="ECO:0007744" key="55">
    <source>
    </source>
</evidence>
<evidence type="ECO:0007744" key="56">
    <source>
    </source>
</evidence>
<evidence type="ECO:0007744" key="57">
    <source>
    </source>
</evidence>
<evidence type="ECO:0007744" key="58">
    <source>
    </source>
</evidence>
<evidence type="ECO:0007744" key="59">
    <source>
    </source>
</evidence>
<evidence type="ECO:0007744" key="60">
    <source>
    </source>
</evidence>
<evidence type="ECO:0007744" key="61">
    <source>
    </source>
</evidence>
<evidence type="ECO:0007829" key="62">
    <source>
        <dbReference type="PDB" id="2A7O"/>
    </source>
</evidence>
<evidence type="ECO:0007829" key="63">
    <source>
        <dbReference type="PDB" id="2MDC"/>
    </source>
</evidence>
<evidence type="ECO:0007829" key="64">
    <source>
        <dbReference type="PDB" id="2MDI"/>
    </source>
</evidence>
<evidence type="ECO:0007829" key="65">
    <source>
        <dbReference type="PDB" id="2MDJ"/>
    </source>
</evidence>
<evidence type="ECO:0007829" key="66">
    <source>
        <dbReference type="PDB" id="5JLB"/>
    </source>
</evidence>
<evidence type="ECO:0007829" key="67">
    <source>
        <dbReference type="PDB" id="5JLE"/>
    </source>
</evidence>
<evidence type="ECO:0007829" key="68">
    <source>
        <dbReference type="PDB" id="5LSX"/>
    </source>
</evidence>
<evidence type="ECO:0007829" key="69">
    <source>
        <dbReference type="PDB" id="5LT7"/>
    </source>
</evidence>
<evidence type="ECO:0007829" key="70">
    <source>
        <dbReference type="PDB" id="7EA8"/>
    </source>
</evidence>
<evidence type="ECO:0007829" key="71">
    <source>
        <dbReference type="PDB" id="7EVR"/>
    </source>
</evidence>
<evidence type="ECO:0007829" key="72">
    <source>
        <dbReference type="PDB" id="7EVS"/>
    </source>
</evidence>
<sequence length="2564" mass="287597">MKQLQPQPPPKMGDFYDPEHPTPEEEENEAKIENVQKTGFIKGPMFKGVASSRFLPKGTKTKVNLEEQGRQKVSFSFSLTKKTLQNRFLTALGNEKQSDTPNPPAVPLQVDSTPKMKMEIGDTLSTAEESSPPKSRVELGKIHFKKHLLHVTSRPLLATTTAVASPPTHAAPLPAVIAESTTVDSPPSSPPPPPPPAQATTLSSPAPVTEPVALPHTPITVLMAAPVPLPVDVAVRSLKEPPIIIVPESLEADTKQDTISNSLEEHVTQILNEQADISSKKEDSHIGKDEEIPDSSKISLSCKKTGSKKKSSQSEGIFLGSESDEDSVRTSSSQRSHDLKFSASIEKERDFKKSSAPLKSEDLGKPSRSKTDRDDKYFSYSKLERDTRYVSSRCRSERERRRSRSHSRSERGSRTNLSYSRSERSHYYDSDRRYHRSSPYRERTRYSRPYTDNRARESSDSEEEYKKTYSRRTSSHSSSYRDLRTSSYSKSDRDCKTETSYLEMERRGKYSSKLERESKRTSENEAIKRCCSPPNELGFRRGSSYSKHDSSASRYKSTLSKPIPKSDKFKNSFCCTELNEEIKQSHSFSLQTPCSKGSELRMINKNPEREKAGSPAPSNRLNDSPTLKKLDELPIFKSEFITHDSHDSIKELDSLSKVKNDQLRSFCPIELNINGSPGAESDLATFCTSKTDAVLMTSDDSVTGSELSPLVKACMLSSNGFQNISRCKEKDLDDTCMLHKKSESPFRETEPLVSPHQDKLMSMPVMTVDYSKTVVKEPVDTRVSCCKTKDSDIYCTLNDSNPSLCNSEAENIEPSVMKISSNSFMNVHLESKPVICDSRNLTDHSKFACEEYKQSIGSTSSASVNHFDDLYQPIGSSGIASSLQSLPPGIKVDSLTLLKCGENTSPVLDAVLKSKKSSEFLKHAGKETIVEVGSDLPDSGKGFASRENRRNNGLSGKCLQEAQEEGNSILPERRGRPEISLDERGEGGHVHTSDDSEVVFSSCDLNLTMEDSDGVTYALKCDSSGHAPEIVSTVHEDYSGSSESSNDESDSEDTDSDDSSIPRNRLQSVVVVPKNSTLPMEETSPCSSRSSQSYRHYSDHWEDERLESRRHLYEEKFESIASKACPQTDKFFLHKGTEKNPEISFTQSSRKQIDNRLPELSHPQSDGVDSTSHTDVKSDPLGHPNSEETVKAKIPSRQQEELPIYSSDFEDVPNKSWQQTTFQNRPDSRLGKTELSFSSSCEIPHVDGLHSSEELRNLGWDFSQEKPSTTYQQPDSSYGACGGHKYQQNAEQYGGTRDYWQGNGYWDPRSGRPPGTGVVYDRTQGQVPDSLTDDREEEENWDQQDGSHFSDQSDKFLLSLQKDKGSVQAPEISSNSIKDTLAVNEKKDFSKNLEKNDIKDRGPLKKRRQEIESDSESDGELQDRKKVRVEVEQGETSVPPGSALVGPSCVMDDFRDPQRWKECAKQGKMPCYFDLIEENVYLTERKKNKSHRDIKRMQCECTPLSKDERAQGEIACGEDCLNRLLMIECSSRCPNGDYCSNRRFQRKQHADVEVILTEKKGWGLRAAKDLPSNTFVLEYCGEVLDHKEFKARVKEYARNKNIHYYFMALKNDEIIDATQKGNCSRFMNHSCEPNCETQKWTVNGQLRVGFFTTKLVPSGSELTFDYQFQRYGKEAQKCFCGSANCRGYLGGENRVSIRAAGGKMKKERSRKKDSVDGELEALMENGEGLSDKNQVLSLSRLMVRIETLEQKLTCLELIQNTHSQSCLKSFLERHGLSLLWIWMAELGDGRESNQKLQEEIIKTLEHLPIPTKNMLEESKVLPIIQRWSQTKTAVPPLSEGDGYSSENTSRAHTPLNTPDPSTKLSTEADTDTPKKLMFRRLKIISENSMDSAISDATSELEGKDGKEDLDQLENVPVEEEEELQSQQLLPQQLPECKVDSETNIEASKLPTSEPEADAEIEPKESNGTKLEEPINEETPSQDEEEGVSDVESERSQEQPDKTVDISDLATKLLDSWKDLKEVYRIPKKSQTEKENTTTERGRDAVGFRDQTPAPKTPNRSRERDPDKQTQNKEKRKRRSSLSPPSSAYERGTKRPDDRYDTPTSKKKVRIKDRNKLSTEERRKLFEQEVAQREAQKQQQQMQNLGMTSPLPYDSLGYNAPHHPFAGYPPGYPMQAYVDPSNPNAGKVLLPTPSMDPVCSPAPYDHAQPLVGHSTEPLSAPPPVPVVPHVAAPVEVSSSQYVAQSDGVVHQDSSVAVLPVPAPGPVQGQNYSVWDSNQQSVSVQQQYSPAQSQATIYYQGQTCPTVYGVTSPYSQTTPPIVQSYAQPSLQYIQGQQIFTAHPQGVVVQPAAAVTTIVAPGQPQPLQPSEMVVTNNLLDLPPPSPPKPKTIVLPPNWKTARDPEGKIYYYHVITRQTQWDPPTWESPGDDASLEHEAEMDLGTPTYDENPMKASKKPKTAEADTSSELAKKSKEVFRKEMSQFIVQCLNPYRKPDCKVGRITTTEDFKHLARKLTHGVMNKELKYCKNPEDLECNENVKHKTKEYIKKYMQKFGAVYKPKEDTELE</sequence>
<protein>
    <recommendedName>
        <fullName evidence="45">Histone-lysine N-methyltransferase SETD2</fullName>
        <ecNumber evidence="16 20 33">2.1.1.359</ecNumber>
    </recommendedName>
    <alternativeName>
        <fullName>HIF-1</fullName>
    </alternativeName>
    <alternativeName>
        <fullName evidence="41">Huntingtin yeast partner B</fullName>
    </alternativeName>
    <alternativeName>
        <fullName>Huntingtin-interacting protein 1</fullName>
        <shortName>HIP-1</shortName>
    </alternativeName>
    <alternativeName>
        <fullName evidence="41">Huntingtin-interacting protein B</fullName>
    </alternativeName>
    <alternativeName>
        <fullName evidence="43">Lysine N-methyltransferase 3A</fullName>
    </alternativeName>
    <alternativeName>
        <fullName evidence="45">Protein-lysine N-methyltransferase SETD2</fullName>
        <ecNumber evidence="34 36">2.1.1.-</ecNumber>
    </alternativeName>
    <alternativeName>
        <fullName evidence="43">SET domain-containing protein 2</fullName>
        <shortName evidence="43">hSET2</shortName>
    </alternativeName>
    <alternativeName>
        <fullName evidence="40">p231HBP</fullName>
    </alternativeName>
</protein>
<organism>
    <name type="scientific">Homo sapiens</name>
    <name type="common">Human</name>
    <dbReference type="NCBI Taxonomy" id="9606"/>
    <lineage>
        <taxon>Eukaryota</taxon>
        <taxon>Metazoa</taxon>
        <taxon>Chordata</taxon>
        <taxon>Craniata</taxon>
        <taxon>Vertebrata</taxon>
        <taxon>Euteleostomi</taxon>
        <taxon>Mammalia</taxon>
        <taxon>Eutheria</taxon>
        <taxon>Euarchontoglires</taxon>
        <taxon>Primates</taxon>
        <taxon>Haplorrhini</taxon>
        <taxon>Catarrhini</taxon>
        <taxon>Hominidae</taxon>
        <taxon>Homo</taxon>
    </lineage>
</organism>